<organism>
    <name type="scientific">Homo sapiens</name>
    <name type="common">Human</name>
    <dbReference type="NCBI Taxonomy" id="9606"/>
    <lineage>
        <taxon>Eukaryota</taxon>
        <taxon>Metazoa</taxon>
        <taxon>Chordata</taxon>
        <taxon>Craniata</taxon>
        <taxon>Vertebrata</taxon>
        <taxon>Euteleostomi</taxon>
        <taxon>Mammalia</taxon>
        <taxon>Eutheria</taxon>
        <taxon>Euarchontoglires</taxon>
        <taxon>Primates</taxon>
        <taxon>Haplorrhini</taxon>
        <taxon>Catarrhini</taxon>
        <taxon>Hominidae</taxon>
        <taxon>Homo</taxon>
    </lineage>
</organism>
<protein>
    <recommendedName>
        <fullName evidence="43">1-phosphatidylinositol 4,5-bisphosphate phosphodiesterase gamma-1</fullName>
        <ecNumber evidence="2">3.1.4.11</ecNumber>
    </recommendedName>
    <alternativeName>
        <fullName>PLC-148</fullName>
    </alternativeName>
    <alternativeName>
        <fullName>Phosphoinositide phospholipase C-gamma-1</fullName>
    </alternativeName>
    <alternativeName>
        <fullName>Phospholipase C-II</fullName>
        <shortName>PLC-II</shortName>
    </alternativeName>
    <alternativeName>
        <fullName>Phospholipase C-gamma-1</fullName>
        <shortName>PLC-gamma-1</shortName>
    </alternativeName>
</protein>
<feature type="initiator methionine" description="Removed" evidence="47">
    <location>
        <position position="1"/>
    </location>
</feature>
<feature type="chain" id="PRO_0000088498" description="1-phosphatidylinositol 4,5-bisphosphate phosphodiesterase gamma-1">
    <location>
        <begin position="2"/>
        <end position="1290"/>
    </location>
</feature>
<feature type="domain" description="PH 1" evidence="5">
    <location>
        <begin position="27"/>
        <end position="142"/>
    </location>
</feature>
<feature type="domain" description="EF-hand" evidence="10">
    <location>
        <begin position="152"/>
        <end position="187"/>
    </location>
</feature>
<feature type="domain" description="PI-PLC X-box" evidence="8">
    <location>
        <begin position="320"/>
        <end position="464"/>
    </location>
</feature>
<feature type="domain" description="PH 2; first part" evidence="5">
    <location>
        <begin position="489"/>
        <end position="523"/>
    </location>
</feature>
<feature type="domain" description="SH2 1" evidence="6">
    <location>
        <begin position="550"/>
        <end position="657"/>
    </location>
</feature>
<feature type="domain" description="SH2 2" evidence="6">
    <location>
        <begin position="668"/>
        <end position="756"/>
    </location>
</feature>
<feature type="domain" description="SH3" evidence="7">
    <location>
        <begin position="791"/>
        <end position="851"/>
    </location>
</feature>
<feature type="domain" description="PH 2; second part" evidence="5">
    <location>
        <begin position="895"/>
        <end position="931"/>
    </location>
</feature>
<feature type="domain" description="PI-PLC Y-box" evidence="9">
    <location>
        <begin position="953"/>
        <end position="1070"/>
    </location>
</feature>
<feature type="domain" description="C2" evidence="4">
    <location>
        <begin position="1071"/>
        <end position="1194"/>
    </location>
</feature>
<feature type="region of interest" description="Disordered" evidence="11">
    <location>
        <begin position="522"/>
        <end position="544"/>
    </location>
</feature>
<feature type="region of interest" description="Disordered" evidence="11">
    <location>
        <begin position="1271"/>
        <end position="1290"/>
    </location>
</feature>
<feature type="active site" evidence="8">
    <location>
        <position position="335"/>
    </location>
</feature>
<feature type="active site" evidence="8">
    <location>
        <position position="380"/>
    </location>
</feature>
<feature type="binding site" evidence="10">
    <location>
        <position position="165"/>
    </location>
    <ligand>
        <name>Ca(2+)</name>
        <dbReference type="ChEBI" id="CHEBI:29108"/>
    </ligand>
</feature>
<feature type="binding site" evidence="10">
    <location>
        <position position="167"/>
    </location>
    <ligand>
        <name>Ca(2+)</name>
        <dbReference type="ChEBI" id="CHEBI:29108"/>
    </ligand>
</feature>
<feature type="binding site" evidence="10">
    <location>
        <position position="169"/>
    </location>
    <ligand>
        <name>Ca(2+)</name>
        <dbReference type="ChEBI" id="CHEBI:29108"/>
    </ligand>
</feature>
<feature type="binding site" evidence="10">
    <location>
        <position position="171"/>
    </location>
    <ligand>
        <name>Ca(2+)</name>
        <dbReference type="ChEBI" id="CHEBI:29108"/>
    </ligand>
</feature>
<feature type="binding site" evidence="10">
    <location>
        <position position="176"/>
    </location>
    <ligand>
        <name>Ca(2+)</name>
        <dbReference type="ChEBI" id="CHEBI:29108"/>
    </ligand>
</feature>
<feature type="modified residue" description="N-acetylalanine" evidence="47">
    <location>
        <position position="2"/>
    </location>
</feature>
<feature type="modified residue" description="Phosphotyrosine" evidence="3">
    <location>
        <position position="506"/>
    </location>
</feature>
<feature type="modified residue" description="Phosphotyrosine; by SYK" evidence="31 37 45 48">
    <location>
        <position position="771"/>
    </location>
</feature>
<feature type="modified residue" description="Phosphotyrosine" evidence="48">
    <location>
        <position position="775"/>
    </location>
</feature>
<feature type="modified residue" description="Phosphotyrosine; by ITK, SYK and TXK" evidence="17 20 37 48">
    <location>
        <position position="783"/>
    </location>
</feature>
<feature type="modified residue" description="Phosphotyrosine" evidence="3">
    <location>
        <position position="977"/>
    </location>
</feature>
<feature type="modified residue" description="Phosphoserine" evidence="46 48 49 51">
    <location>
        <position position="1221"/>
    </location>
</feature>
<feature type="modified residue" description="Phosphoserine" evidence="51">
    <location>
        <position position="1227"/>
    </location>
</feature>
<feature type="modified residue" description="Phosphoserine" evidence="51">
    <location>
        <position position="1233"/>
    </location>
</feature>
<feature type="modified residue" description="Phosphoserine" evidence="18">
    <location>
        <position position="1248"/>
    </location>
</feature>
<feature type="modified residue" description="Phosphotyrosine" evidence="45 49">
    <location>
        <position position="1253"/>
    </location>
</feature>
<feature type="modified residue" description="Phosphoserine" evidence="51">
    <location>
        <position position="1263"/>
    </location>
</feature>
<feature type="splice variant" id="VSP_038692" description="In isoform 2." evidence="42">
    <original>K</original>
    <variation>KQ</variation>
    <location>
        <position position="1215"/>
    </location>
</feature>
<feature type="sequence variant" id="VAR_025213" description="In dbSNP:rs2229348." evidence="41">
    <original>T</original>
    <variation>N</variation>
    <location>
        <position position="209"/>
    </location>
</feature>
<feature type="sequence variant" id="VAR_022130" description="In dbSNP:rs2228246." evidence="41">
    <original>S</original>
    <variation>G</variation>
    <location>
        <position position="279"/>
    </location>
</feature>
<feature type="sequence variant" id="VAR_025214" description="In dbSNP:rs34203315." evidence="41">
    <original>S</original>
    <variation>T</variation>
    <location>
        <position position="739"/>
    </location>
</feature>
<feature type="sequence variant" id="VAR_011908" description="In dbSNP:rs753381." evidence="23 41">
    <original>I</original>
    <variation>T</variation>
    <location>
        <position position="813"/>
    </location>
</feature>
<feature type="sequence variant" id="VAR_089011" description="In IDAA; likely pathogenic; gain of function; increased phospholipase C activity." evidence="35">
    <original>S</original>
    <variation>F</variation>
    <location>
        <position position="1021"/>
    </location>
</feature>
<feature type="strand" evidence="56">
    <location>
        <begin position="551"/>
        <end position="554"/>
    </location>
</feature>
<feature type="strand" evidence="54">
    <location>
        <begin position="556"/>
        <end position="558"/>
    </location>
</feature>
<feature type="helix" evidence="56">
    <location>
        <begin position="561"/>
        <end position="576"/>
    </location>
</feature>
<feature type="strand" evidence="56">
    <location>
        <begin position="583"/>
        <end position="587"/>
    </location>
</feature>
<feature type="strand" evidence="56">
    <location>
        <begin position="589"/>
        <end position="591"/>
    </location>
</feature>
<feature type="strand" evidence="56">
    <location>
        <begin position="595"/>
        <end position="601"/>
    </location>
</feature>
<feature type="strand" evidence="56">
    <location>
        <begin position="604"/>
        <end position="612"/>
    </location>
</feature>
<feature type="helix" evidence="55">
    <location>
        <begin position="615"/>
        <end position="617"/>
    </location>
</feature>
<feature type="strand" evidence="56">
    <location>
        <begin position="621"/>
        <end position="624"/>
    </location>
</feature>
<feature type="strand" evidence="56">
    <location>
        <begin position="628"/>
        <end position="631"/>
    </location>
</feature>
<feature type="helix" evidence="56">
    <location>
        <begin position="632"/>
        <end position="641"/>
    </location>
</feature>
<feature type="strand" evidence="54">
    <location>
        <begin position="644"/>
        <end position="646"/>
    </location>
</feature>
<feature type="strand" evidence="54">
    <location>
        <begin position="649"/>
        <end position="651"/>
    </location>
</feature>
<feature type="helix" evidence="56">
    <location>
        <begin position="662"/>
        <end position="665"/>
    </location>
</feature>
<feature type="strand" evidence="56">
    <location>
        <begin position="669"/>
        <end position="672"/>
    </location>
</feature>
<feature type="helix" evidence="56">
    <location>
        <begin position="675"/>
        <end position="683"/>
    </location>
</feature>
<feature type="strand" evidence="56">
    <location>
        <begin position="690"/>
        <end position="695"/>
    </location>
</feature>
<feature type="strand" evidence="56">
    <location>
        <begin position="701"/>
        <end position="708"/>
    </location>
</feature>
<feature type="strand" evidence="56">
    <location>
        <begin position="711"/>
        <end position="720"/>
    </location>
</feature>
<feature type="strand" evidence="56">
    <location>
        <begin position="723"/>
        <end position="726"/>
    </location>
</feature>
<feature type="strand" evidence="56">
    <location>
        <begin position="729"/>
        <end position="733"/>
    </location>
</feature>
<feature type="helix" evidence="56">
    <location>
        <begin position="734"/>
        <end position="741"/>
    </location>
</feature>
<feature type="helix" evidence="56">
    <location>
        <begin position="758"/>
        <end position="764"/>
    </location>
</feature>
<feature type="strand" evidence="52">
    <location>
        <begin position="792"/>
        <end position="794"/>
    </location>
</feature>
<feature type="strand" evidence="52">
    <location>
        <begin position="805"/>
        <end position="809"/>
    </location>
</feature>
<feature type="strand" evidence="53">
    <location>
        <begin position="817"/>
        <end position="820"/>
    </location>
</feature>
<feature type="turn" evidence="52">
    <location>
        <begin position="825"/>
        <end position="827"/>
    </location>
</feature>
<feature type="strand" evidence="52">
    <location>
        <begin position="834"/>
        <end position="836"/>
    </location>
</feature>
<feature type="turn" evidence="52">
    <location>
        <begin position="843"/>
        <end position="845"/>
    </location>
</feature>
<feature type="modified residue" description="Phosphoserine" evidence="46 48 50">
    <location sequence="P19174-2">
        <position position="1222"/>
    </location>
</feature>
<comment type="function">
    <text evidence="2 27 35">Mediates the production of the second messenger molecules diacylglycerol (DAG) and inositol 1,4,5-trisphosphate (IP3). Plays an important role in the regulation of intracellular signaling cascades. Becomes activated in response to ligand-mediated activation of receptor-type tyrosine kinases, such as PDGFRA, PDGFRB, EGFR, FGFR1, FGFR2, FGFR3 and FGFR4 (By similarity). Plays a role in actin reorganization and cell migration (PubMed:17229814). Guanine nucleotide exchange factor that binds the GTPase DNM1 and catalyzes the dissociation of GDP, allowing a GTP molecule to bind in its place, therefore enhancing DNM1-dependent endocytosis (By similarity).</text>
</comment>
<comment type="catalytic activity">
    <reaction evidence="2">
        <text>a 1,2-diacyl-sn-glycero-3-phospho-(1D-myo-inositol-4,5-bisphosphate) + H2O = 1D-myo-inositol 1,4,5-trisphosphate + a 1,2-diacyl-sn-glycerol + H(+)</text>
        <dbReference type="Rhea" id="RHEA:33179"/>
        <dbReference type="ChEBI" id="CHEBI:15377"/>
        <dbReference type="ChEBI" id="CHEBI:15378"/>
        <dbReference type="ChEBI" id="CHEBI:17815"/>
        <dbReference type="ChEBI" id="CHEBI:58456"/>
        <dbReference type="ChEBI" id="CHEBI:203600"/>
        <dbReference type="EC" id="3.1.4.11"/>
    </reaction>
    <physiologicalReaction direction="left-to-right" evidence="2">
        <dbReference type="Rhea" id="RHEA:33180"/>
    </physiologicalReaction>
</comment>
<comment type="catalytic activity">
    <reaction evidence="2">
        <text>a 1,2-diacyl-sn-glycero-3-phospho-(1D-myo-inositol) + H2O = 1D-myo-inositol 1-phosphate + a 1,2-diacyl-sn-glycerol + H(+)</text>
        <dbReference type="Rhea" id="RHEA:43484"/>
        <dbReference type="ChEBI" id="CHEBI:15377"/>
        <dbReference type="ChEBI" id="CHEBI:15378"/>
        <dbReference type="ChEBI" id="CHEBI:17815"/>
        <dbReference type="ChEBI" id="CHEBI:57880"/>
        <dbReference type="ChEBI" id="CHEBI:58433"/>
    </reaction>
    <physiologicalReaction direction="left-to-right" evidence="2">
        <dbReference type="Rhea" id="RHEA:43485"/>
    </physiologicalReaction>
</comment>
<comment type="cofactor">
    <cofactor evidence="2">
        <name>Ca(2+)</name>
        <dbReference type="ChEBI" id="CHEBI:29108"/>
    </cofactor>
</comment>
<comment type="activity regulation">
    <text evidence="18">Activated by phosphorylation on tyrosine residues.</text>
</comment>
<comment type="subunit">
    <text evidence="2 3 13 14 15 19 21 22 25 26 27 29 30 31 33 34 36 37 38 39 40">Interacts with AGAP2 via its SH3 domain. Interacts (via SH2 domain) with RET. Interacts with FLT1 (tyrosine-phosphorylated) (By similarity). Interacts (via SH2 domain) with FGFR1, FGFR2, FGFR3 and FGFR4 (phosphorylated). Interacts with LAT (phosphorylated) upon TCR activation. Interacts (via SH3 domain) with the Pro-rich domain of TNK1. Associates with BLNK, VAV1, GRB2 and NCK1 in a B-cell antigen receptor-dependent fashion. Interacts with CBLB in activated T-cells; which inhibits phosphorylation. Interacts with SHB. Interacts (via SH3 domain) with the Arg/Gly-rich-flanked Pro-rich domains of KHDRBS1/SAM68. This interaction is selectively regulated by arginine methylation of KHDRBS1/SAM68. Interacts with INPP5D/SHIP1, THEMIS and CLNK (By similarity). Interacts with AXL, FLT4 and KIT. Interacts with RALGPS1. Interacts (via the SH2 domains) with VIL1 (phosphorylated at C-terminus tyrosine phosphorylation sites). Interacts (via SH2 domain) with PDGFRA and PDGFRB (tyrosine phosphorylated). Interacts with PIP5K1C (By similarity). Interacts with NTRK1 and NTRK2 (phosphorylated upon ligand-binding). Interacts with SYK; activates PLCG1. Interacts with GRB2, LAT and THEMIS upon TCR activation in thymocytes (By similarity). Interacts with TESPA1; the association is increased with prolonged stimulation of the TCR and may facilitate the assembly of the LAT signalosome. Interacts (via C-terminal proline-rich domain (PRD)) with PLCG1 (via SH3 domain); this interaction leads to guanine nucleotide exchange from PlCG1 to DNM1 and enhances DNM1-dependent endocytosis (By similarity).</text>
</comment>
<comment type="subunit">
    <text evidence="16">(Microbial infection) Interacts (via SH3 domain) with HEV ORF3 protein.</text>
</comment>
<comment type="interaction">
    <interactant intactId="EBI-79387">
        <id>P19174</id>
    </interactant>
    <interactant intactId="EBI-1102694">
        <id>P42684</id>
        <label>ABL2</label>
    </interactant>
    <organismsDiffer>false</organismsDiffer>
    <experiments>4</experiments>
</comment>
<comment type="interaction">
    <interactant intactId="EBI-79387">
        <id>P19174</id>
    </interactant>
    <interactant intactId="EBI-296087">
        <id>P31749</id>
        <label>AKT1</label>
    </interactant>
    <organismsDiffer>false</organismsDiffer>
    <experiments>9</experiments>
</comment>
<comment type="interaction">
    <interactant intactId="EBI-79387">
        <id>P19174</id>
    </interactant>
    <interactant intactId="EBI-608057">
        <id>P10275</id>
        <label>AR</label>
    </interactant>
    <organismsDiffer>false</organismsDiffer>
    <experiments>22</experiments>
</comment>
<comment type="interaction">
    <interactant intactId="EBI-79387">
        <id>P19174</id>
    </interactant>
    <interactant intactId="EBI-346622">
        <id>Q9ULH1</id>
        <label>ASAP1</label>
    </interactant>
    <organismsDiffer>false</organismsDiffer>
    <experiments>3</experiments>
</comment>
<comment type="interaction">
    <interactant intactId="EBI-79387">
        <id>P19174</id>
    </interactant>
    <interactant intactId="EBI-310968">
        <id>O43150</id>
        <label>ASAP2</label>
    </interactant>
    <organismsDiffer>false</organismsDiffer>
    <experiments>3</experiments>
</comment>
<comment type="interaction">
    <interactant intactId="EBI-79387">
        <id>P19174</id>
    </interactant>
    <interactant intactId="EBI-603614">
        <id>Q03135</id>
        <label>CAV1</label>
    </interactant>
    <organismsDiffer>false</organismsDiffer>
    <experiments>2</experiments>
</comment>
<comment type="interaction">
    <interactant intactId="EBI-79387">
        <id>P19174</id>
    </interactant>
    <interactant intactId="EBI-78277">
        <id>P20273</id>
        <label>CD22</label>
    </interactant>
    <organismsDiffer>false</organismsDiffer>
    <experiments>2</experiments>
</comment>
<comment type="interaction">
    <interactant intactId="EBI-79387">
        <id>P19174</id>
    </interactant>
    <interactant intactId="EBI-1580565">
        <id>Q9BZW8</id>
        <label>CD244</label>
    </interactant>
    <organismsDiffer>false</organismsDiffer>
    <experiments>2</experiments>
</comment>
<comment type="interaction">
    <interactant intactId="EBI-79387">
        <id>P19174</id>
    </interactant>
    <interactant intactId="EBI-1752795">
        <id>Q9H1R2</id>
        <label>DUSP15</label>
    </interactant>
    <organismsDiffer>false</organismsDiffer>
    <experiments>2</experiments>
</comment>
<comment type="interaction">
    <interactant intactId="EBI-79387">
        <id>P19174</id>
    </interactant>
    <interactant intactId="EBI-297353">
        <id>P00533</id>
        <label>EGFR</label>
    </interactant>
    <organismsDiffer>false</organismsDiffer>
    <experiments>6</experiments>
</comment>
<comment type="interaction">
    <interactant intactId="EBI-79387">
        <id>P19174</id>
    </interactant>
    <interactant intactId="EBI-641062">
        <id>P04626</id>
        <label>ERBB2</label>
    </interactant>
    <organismsDiffer>false</organismsDiffer>
    <experiments>5</experiments>
</comment>
<comment type="interaction">
    <interactant intactId="EBI-79387">
        <id>P19174</id>
    </interactant>
    <interactant intactId="EBI-720706">
        <id>P21860</id>
        <label>ERBB3</label>
    </interactant>
    <organismsDiffer>false</organismsDiffer>
    <experiments>4</experiments>
</comment>
<comment type="interaction">
    <interactant intactId="EBI-79387">
        <id>P19174</id>
    </interactant>
    <interactant intactId="EBI-724784">
        <id>P31994</id>
        <label>FCGR2B</label>
    </interactant>
    <organismsDiffer>false</organismsDiffer>
    <experiments>2</experiments>
</comment>
<comment type="interaction">
    <interactant intactId="EBI-79387">
        <id>P19174</id>
    </interactant>
    <interactant intactId="EBI-1028277">
        <id>P11362</id>
        <label>FGFR1</label>
    </interactant>
    <organismsDiffer>false</organismsDiffer>
    <experiments>11</experiments>
</comment>
<comment type="interaction">
    <interactant intactId="EBI-79387">
        <id>P19174</id>
    </interactant>
    <interactant intactId="EBI-15489960">
        <id>P21802-1</id>
        <label>FGFR2</label>
    </interactant>
    <organismsDiffer>false</organismsDiffer>
    <experiments>9</experiments>
</comment>
<comment type="interaction">
    <interactant intactId="EBI-79387">
        <id>P19174</id>
    </interactant>
    <interactant intactId="EBI-517684">
        <id>Q13480</id>
        <label>GAB1</label>
    </interactant>
    <organismsDiffer>false</organismsDiffer>
    <experiments>36</experiments>
</comment>
<comment type="interaction">
    <interactant intactId="EBI-79387">
        <id>P19174</id>
    </interactant>
    <interactant intactId="EBI-401755">
        <id>P62993</id>
        <label>GRB2</label>
    </interactant>
    <organismsDiffer>false</organismsDiffer>
    <experiments>2</experiments>
</comment>
<comment type="interaction">
    <interactant intactId="EBI-79387">
        <id>P19174</id>
    </interactant>
    <interactant intactId="EBI-475899">
        <id>P06213</id>
        <label>INSR</label>
    </interactant>
    <organismsDiffer>false</organismsDiffer>
    <experiments>9</experiments>
</comment>
<comment type="interaction">
    <interactant intactId="EBI-79387">
        <id>P19174</id>
    </interactant>
    <interactant intactId="EBI-1364">
        <id>Q07666</id>
        <label>KHDRBS1</label>
    </interactant>
    <organismsDiffer>false</organismsDiffer>
    <experiments>3</experiments>
</comment>
<comment type="interaction">
    <interactant intactId="EBI-79387">
        <id>P19174</id>
    </interactant>
    <interactant intactId="EBI-1379503">
        <id>P10721</id>
        <label>KIT</label>
    </interactant>
    <organismsDiffer>false</organismsDiffer>
    <experiments>31</experiments>
</comment>
<comment type="interaction">
    <interactant intactId="EBI-79387">
        <id>P19174</id>
    </interactant>
    <interactant intactId="EBI-1222766">
        <id>O43561</id>
        <label>LAT</label>
    </interactant>
    <organismsDiffer>false</organismsDiffer>
    <experiments>7</experiments>
</comment>
<comment type="interaction">
    <interactant intactId="EBI-79387">
        <id>P19174</id>
    </interactant>
    <interactant intactId="EBI-346946">
        <id>Q13094</id>
        <label>LCP2</label>
    </interactant>
    <organismsDiffer>false</organismsDiffer>
    <experiments>3</experiments>
</comment>
<comment type="interaction">
    <interactant intactId="EBI-79387">
        <id>P19174</id>
    </interactant>
    <interactant intactId="EBI-881">
        <id>Q92918</id>
        <label>MAP4K1</label>
    </interactant>
    <organismsDiffer>false</organismsDiffer>
    <experiments>6</experiments>
</comment>
<comment type="interaction">
    <interactant intactId="EBI-79387">
        <id>P19174</id>
    </interactant>
    <interactant intactId="EBI-1039152">
        <id>P08581</id>
        <label>MET</label>
    </interactant>
    <organismsDiffer>false</organismsDiffer>
    <experiments>10</experiments>
</comment>
<comment type="interaction">
    <interactant intactId="EBI-79387">
        <id>P19174</id>
    </interactant>
    <interactant intactId="EBI-1028226">
        <id>P04629</id>
        <label>NTRK1</label>
    </interactant>
    <organismsDiffer>false</organismsDiffer>
    <experiments>4</experiments>
</comment>
<comment type="interaction">
    <interactant intactId="EBI-79387">
        <id>P19174</id>
    </interactant>
    <interactant intactId="EBI-641237">
        <id>P09619</id>
        <label>PDGFRB</label>
    </interactant>
    <organismsDiffer>false</organismsDiffer>
    <experiments>7</experiments>
</comment>
<comment type="interaction">
    <interactant intactId="EBI-79387">
        <id>P19174</id>
    </interactant>
    <interactant intactId="EBI-413628">
        <id>P63000</id>
        <label>RAC1</label>
    </interactant>
    <organismsDiffer>false</organismsDiffer>
    <experiments>7</experiments>
</comment>
<comment type="interaction">
    <interactant intactId="EBI-79387">
        <id>P19174</id>
    </interactant>
    <interactant intactId="EBI-1570523">
        <id>Q8TB24</id>
        <label>RIN3</label>
    </interactant>
    <organismsDiffer>false</organismsDiffer>
    <experiments>3</experiments>
</comment>
<comment type="interaction">
    <interactant intactId="EBI-79387">
        <id>P19174</id>
    </interactant>
    <interactant intactId="EBI-20819026">
        <id>Q8WTV0-3</id>
        <label>SCARB1</label>
    </interactant>
    <organismsDiffer>false</organismsDiffer>
    <experiments>2</experiments>
</comment>
<comment type="interaction">
    <interactant intactId="EBI-79387">
        <id>P19174</id>
    </interactant>
    <interactant intactId="EBI-3923013">
        <id>O14796</id>
        <label>SH2D1B</label>
    </interactant>
    <organismsDiffer>false</organismsDiffer>
    <experiments>2</experiments>
</comment>
<comment type="interaction">
    <interactant intactId="EBI-79387">
        <id>P19174</id>
    </interactant>
    <interactant intactId="EBI-1570571">
        <id>Q9UPX8</id>
        <label>SHANK2</label>
    </interactant>
    <organismsDiffer>false</organismsDiffer>
    <experiments>4</experiments>
</comment>
<comment type="interaction">
    <interactant intactId="EBI-79387">
        <id>P19174</id>
    </interactant>
    <interactant intactId="EBI-1752330">
        <id>Q9BYB0</id>
        <label>SHANK3</label>
    </interactant>
    <organismsDiffer>false</organismsDiffer>
    <experiments>2</experiments>
</comment>
<comment type="interaction">
    <interactant intactId="EBI-79387">
        <id>P19174</id>
    </interactant>
    <interactant intactId="EBI-1752620">
        <id>Q15036</id>
        <label>SNX17</label>
    </interactant>
    <organismsDiffer>false</organismsDiffer>
    <experiments>2</experiments>
</comment>
<comment type="interaction">
    <interactant intactId="EBI-79387">
        <id>P19174</id>
    </interactant>
    <interactant intactId="EBI-297487">
        <id>Q07889</id>
        <label>SOS1</label>
    </interactant>
    <organismsDiffer>false</organismsDiffer>
    <experiments>3</experiments>
</comment>
<comment type="interaction">
    <interactant intactId="EBI-79387">
        <id>P19174</id>
    </interactant>
    <interactant intactId="EBI-298181">
        <id>Q07890</id>
        <label>SOS2</label>
    </interactant>
    <organismsDiffer>false</organismsDiffer>
    <experiments>4</experiments>
</comment>
<comment type="interaction">
    <interactant intactId="EBI-79387">
        <id>P19174</id>
    </interactant>
    <interactant intactId="EBI-78302">
        <id>P43405</id>
        <label>SYK</label>
    </interactant>
    <organismsDiffer>false</organismsDiffer>
    <experiments>4</experiments>
</comment>
<comment type="interaction">
    <interactant intactId="EBI-79387">
        <id>P19174</id>
    </interactant>
    <interactant intactId="EBI-15102259">
        <id>Q8N1K5-1</id>
        <label>THEMIS</label>
    </interactant>
    <organismsDiffer>false</organismsDiffer>
    <experiments>3</experiments>
</comment>
<comment type="interaction">
    <interactant intactId="EBI-79387">
        <id>P19174</id>
    </interactant>
    <interactant intactId="EBI-746958">
        <id>P09327</id>
        <label>VIL1</label>
    </interactant>
    <organismsDiffer>false</organismsDiffer>
    <experiments>5</experiments>
</comment>
<comment type="interaction">
    <interactant intactId="EBI-79387">
        <id>P19174</id>
    </interactant>
    <interactant intactId="EBI-7645815">
        <id>Q71V39</id>
        <label>EEF1A2</label>
    </interactant>
    <organismsDiffer>true</organismsDiffer>
    <experiments>3</experiments>
</comment>
<comment type="subcellular location">
    <subcellularLocation>
        <location evidence="27">Cell projection</location>
        <location evidence="27">Lamellipodium</location>
    </subcellularLocation>
    <subcellularLocation>
        <location evidence="27">Cell projection</location>
        <location evidence="27">Ruffle</location>
    </subcellularLocation>
    <text evidence="27">Rapidly redistributed to ruffles and lamellipodia structures in response to epidermal growth factor (EGF) treatment.</text>
</comment>
<comment type="alternative products">
    <event type="alternative splicing"/>
    <isoform>
        <id>P19174-1</id>
        <name>1</name>
        <sequence type="displayed"/>
    </isoform>
    <isoform>
        <id>P19174-2</id>
        <name>2</name>
        <sequence type="described" ref="VSP_038692"/>
    </isoform>
</comment>
<comment type="domain">
    <text evidence="3 14">The SH3 domain mediates interaction with CLNK (By similarity). The SH3 domain also mediates interaction with RALGPS1 (PubMed:10747847).</text>
</comment>
<comment type="PTM">
    <text evidence="1 12 17 18 20 24 26 28 31 32 33 37">Tyrosine phosphorylated in response to signaling via activated FLT3, KIT and PDGFRA (By similarity). Tyrosine phosphorylated by activated FGFR1, FGFR2, FGFR3 and FGFR4. Tyrosine phosphorylated by activated FLT1 and KDR. Tyrosine phosphorylated by activated PDGFRB. The receptor-mediated activation of PLCG1 involves its phosphorylation by tyrosine kinases, in response to ligation of a variety of growth factor receptors and immune system receptors. For instance, SYK phosphorylates and activates PLCG1 in response to ligation of the B-cell receptor. May be dephosphorylated by PTPRJ. Phosphorylated by ITK and TXK on Tyr-783 upon TCR activation in T-cells.</text>
</comment>
<comment type="PTM">
    <text evidence="3">Ubiquitinated by CBLB in activated T-cells.</text>
</comment>
<comment type="disease" evidence="35">
    <disease id="DI-06764">
        <name>Immune dysregulation, autoimmunity, and autoinflammation</name>
        <acronym>IDAA</acronym>
        <description>An autosomal dominant disorder characterized by anemia and thrombocytopenia associated with circulating autoantibodies, positive Coombs test, immune dysregulation, and increased levels of proinflammatory cytokines.</description>
        <dbReference type="MIM" id="620514"/>
    </disease>
    <text>The disease may be caused by variants affecting the gene represented in this entry.</text>
</comment>
<keyword id="KW-0002">3D-structure</keyword>
<keyword id="KW-0007">Acetylation</keyword>
<keyword id="KW-0025">Alternative splicing</keyword>
<keyword id="KW-0106">Calcium</keyword>
<keyword id="KW-0966">Cell projection</keyword>
<keyword id="KW-0225">Disease variant</keyword>
<keyword id="KW-0945">Host-virus interaction</keyword>
<keyword id="KW-0378">Hydrolase</keyword>
<keyword id="KW-0442">Lipid degradation</keyword>
<keyword id="KW-0443">Lipid metabolism</keyword>
<keyword id="KW-0479">Metal-binding</keyword>
<keyword id="KW-0597">Phosphoprotein</keyword>
<keyword id="KW-1267">Proteomics identification</keyword>
<keyword id="KW-1185">Reference proteome</keyword>
<keyword id="KW-0677">Repeat</keyword>
<keyword id="KW-0727">SH2 domain</keyword>
<keyword id="KW-0728">SH3 domain</keyword>
<keyword id="KW-0807">Transducer</keyword>
<keyword id="KW-0832">Ubl conjugation</keyword>
<reference key="1">
    <citation type="journal article" date="1990" name="Mol. Cell. Biol.">
        <title>Characterization and cDNA cloning of phospholipase C-gamma, a major substrate for heparin-binding growth factor 1 (acidic fibroblast growth factor)-activated tyrosine kinase.</title>
        <authorList>
            <person name="Burgess W.H."/>
            <person name="Dionne C.A."/>
            <person name="Kaplow J.M."/>
            <person name="Mudd R."/>
            <person name="Friesel R."/>
            <person name="Zilberstein A."/>
            <person name="Schlessinger J."/>
            <person name="Jaye M."/>
        </authorList>
    </citation>
    <scope>NUCLEOTIDE SEQUENCE [MRNA] (ISOFORM 1)</scope>
    <scope>PHOSPHORYLATION</scope>
    <source>
        <tissue>Brain</tissue>
        <tissue>Vein</tissue>
    </source>
</reference>
<reference key="2">
    <citation type="submission" date="2005-11" db="EMBL/GenBank/DDBJ databases">
        <authorList>
            <consortium name="NIEHS SNPs program"/>
        </authorList>
    </citation>
    <scope>NUCLEOTIDE SEQUENCE [GENOMIC DNA]</scope>
    <scope>VARIANTS ASN-209; GLY-279; THR-739 AND THR-813</scope>
</reference>
<reference key="3">
    <citation type="journal article" date="2001" name="Nature">
        <title>The DNA sequence and comparative analysis of human chromosome 20.</title>
        <authorList>
            <person name="Deloukas P."/>
            <person name="Matthews L.H."/>
            <person name="Ashurst J.L."/>
            <person name="Burton J."/>
            <person name="Gilbert J.G.R."/>
            <person name="Jones M."/>
            <person name="Stavrides G."/>
            <person name="Almeida J.P."/>
            <person name="Babbage A.K."/>
            <person name="Bagguley C.L."/>
            <person name="Bailey J."/>
            <person name="Barlow K.F."/>
            <person name="Bates K.N."/>
            <person name="Beard L.M."/>
            <person name="Beare D.M."/>
            <person name="Beasley O.P."/>
            <person name="Bird C.P."/>
            <person name="Blakey S.E."/>
            <person name="Bridgeman A.M."/>
            <person name="Brown A.J."/>
            <person name="Buck D."/>
            <person name="Burrill W.D."/>
            <person name="Butler A.P."/>
            <person name="Carder C."/>
            <person name="Carter N.P."/>
            <person name="Chapman J.C."/>
            <person name="Clamp M."/>
            <person name="Clark G."/>
            <person name="Clark L.N."/>
            <person name="Clark S.Y."/>
            <person name="Clee C.M."/>
            <person name="Clegg S."/>
            <person name="Cobley V.E."/>
            <person name="Collier R.E."/>
            <person name="Connor R.E."/>
            <person name="Corby N.R."/>
            <person name="Coulson A."/>
            <person name="Coville G.J."/>
            <person name="Deadman R."/>
            <person name="Dhami P.D."/>
            <person name="Dunn M."/>
            <person name="Ellington A.G."/>
            <person name="Frankland J.A."/>
            <person name="Fraser A."/>
            <person name="French L."/>
            <person name="Garner P."/>
            <person name="Grafham D.V."/>
            <person name="Griffiths C."/>
            <person name="Griffiths M.N.D."/>
            <person name="Gwilliam R."/>
            <person name="Hall R.E."/>
            <person name="Hammond S."/>
            <person name="Harley J.L."/>
            <person name="Heath P.D."/>
            <person name="Ho S."/>
            <person name="Holden J.L."/>
            <person name="Howden P.J."/>
            <person name="Huckle E."/>
            <person name="Hunt A.R."/>
            <person name="Hunt S.E."/>
            <person name="Jekosch K."/>
            <person name="Johnson C.M."/>
            <person name="Johnson D."/>
            <person name="Kay M.P."/>
            <person name="Kimberley A.M."/>
            <person name="King A."/>
            <person name="Knights A."/>
            <person name="Laird G.K."/>
            <person name="Lawlor S."/>
            <person name="Lehvaeslaiho M.H."/>
            <person name="Leversha M.A."/>
            <person name="Lloyd C."/>
            <person name="Lloyd D.M."/>
            <person name="Lovell J.D."/>
            <person name="Marsh V.L."/>
            <person name="Martin S.L."/>
            <person name="McConnachie L.J."/>
            <person name="McLay K."/>
            <person name="McMurray A.A."/>
            <person name="Milne S.A."/>
            <person name="Mistry D."/>
            <person name="Moore M.J.F."/>
            <person name="Mullikin J.C."/>
            <person name="Nickerson T."/>
            <person name="Oliver K."/>
            <person name="Parker A."/>
            <person name="Patel R."/>
            <person name="Pearce T.A.V."/>
            <person name="Peck A.I."/>
            <person name="Phillimore B.J.C.T."/>
            <person name="Prathalingam S.R."/>
            <person name="Plumb R.W."/>
            <person name="Ramsay H."/>
            <person name="Rice C.M."/>
            <person name="Ross M.T."/>
            <person name="Scott C.E."/>
            <person name="Sehra H.K."/>
            <person name="Shownkeen R."/>
            <person name="Sims S."/>
            <person name="Skuce C.D."/>
            <person name="Smith M.L."/>
            <person name="Soderlund C."/>
            <person name="Steward C.A."/>
            <person name="Sulston J.E."/>
            <person name="Swann R.M."/>
            <person name="Sycamore N."/>
            <person name="Taylor R."/>
            <person name="Tee L."/>
            <person name="Thomas D.W."/>
            <person name="Thorpe A."/>
            <person name="Tracey A."/>
            <person name="Tromans A.C."/>
            <person name="Vaudin M."/>
            <person name="Wall M."/>
            <person name="Wallis J.M."/>
            <person name="Whitehead S.L."/>
            <person name="Whittaker P."/>
            <person name="Willey D.L."/>
            <person name="Williams L."/>
            <person name="Williams S.A."/>
            <person name="Wilming L."/>
            <person name="Wray P.W."/>
            <person name="Hubbard T."/>
            <person name="Durbin R.M."/>
            <person name="Bentley D.R."/>
            <person name="Beck S."/>
            <person name="Rogers J."/>
        </authorList>
    </citation>
    <scope>NUCLEOTIDE SEQUENCE [LARGE SCALE GENOMIC DNA]</scope>
</reference>
<reference key="4">
    <citation type="submission" date="2005-09" db="EMBL/GenBank/DDBJ databases">
        <authorList>
            <person name="Mural R.J."/>
            <person name="Istrail S."/>
            <person name="Sutton G.G."/>
            <person name="Florea L."/>
            <person name="Halpern A.L."/>
            <person name="Mobarry C.M."/>
            <person name="Lippert R."/>
            <person name="Walenz B."/>
            <person name="Shatkay H."/>
            <person name="Dew I."/>
            <person name="Miller J.R."/>
            <person name="Flanigan M.J."/>
            <person name="Edwards N.J."/>
            <person name="Bolanos R."/>
            <person name="Fasulo D."/>
            <person name="Halldorsson B.V."/>
            <person name="Hannenhalli S."/>
            <person name="Turner R."/>
            <person name="Yooseph S."/>
            <person name="Lu F."/>
            <person name="Nusskern D.R."/>
            <person name="Shue B.C."/>
            <person name="Zheng X.H."/>
            <person name="Zhong F."/>
            <person name="Delcher A.L."/>
            <person name="Huson D.H."/>
            <person name="Kravitz S.A."/>
            <person name="Mouchard L."/>
            <person name="Reinert K."/>
            <person name="Remington K.A."/>
            <person name="Clark A.G."/>
            <person name="Waterman M.S."/>
            <person name="Eichler E.E."/>
            <person name="Adams M.D."/>
            <person name="Hunkapiller M.W."/>
            <person name="Myers E.W."/>
            <person name="Venter J.C."/>
        </authorList>
    </citation>
    <scope>NUCLEOTIDE SEQUENCE [LARGE SCALE GENOMIC DNA]</scope>
</reference>
<reference key="5">
    <citation type="journal article" date="2004" name="Genome Res.">
        <title>The status, quality, and expansion of the NIH full-length cDNA project: the Mammalian Gene Collection (MGC).</title>
        <authorList>
            <consortium name="The MGC Project Team"/>
        </authorList>
    </citation>
    <scope>NUCLEOTIDE SEQUENCE [LARGE SCALE MRNA] (ISOFORMS 1 AND 2)</scope>
    <scope>VARIANT THR-813</scope>
    <source>
        <tissue>Brain</tissue>
        <tissue>Testis</tissue>
    </source>
</reference>
<reference key="6">
    <citation type="journal article" date="1991" name="Mol. Cell. Biol.">
        <title>A tyrosine-phosphorylated carboxy-terminal peptide of the fibroblast growth factor receptor (Flg) is a binding site for the SH2 domain of phospholipase C-gamma 1.</title>
        <authorList>
            <person name="Mohammadi M."/>
            <person name="Honegger A.M."/>
            <person name="Rotin D."/>
            <person name="Fischer R."/>
            <person name="Bellot F."/>
            <person name="Li W."/>
            <person name="Dionne C.A."/>
            <person name="Jaye M."/>
            <person name="Rubinstein M."/>
            <person name="Schlessinger J."/>
        </authorList>
    </citation>
    <scope>INTERACTION WITH FGFR1</scope>
</reference>
<reference key="7">
    <citation type="journal article" date="1992" name="J. Biol. Chem.">
        <title>Inhibition of CD3-linked phospholipase C by phorbol ester and by cAMP is associated with decreased phosphotyrosine and increased phosphoserine contents of PLC-gamma 1.</title>
        <authorList>
            <person name="Park D.J."/>
            <person name="Min H.K."/>
            <person name="Rhee S.G."/>
        </authorList>
    </citation>
    <scope>PHOSPHORYLATION AT SER-1248</scope>
</reference>
<reference key="8">
    <citation type="journal article" date="1994" name="J. Biol. Chem.">
        <title>Signal transduction by fibroblast growth factor receptor-4 (FGFR-4). Comparison with FGFR-1.</title>
        <authorList>
            <person name="Vainikka S."/>
            <person name="Joukov V."/>
            <person name="Wennstrom S."/>
            <person name="Bergman M."/>
            <person name="Pelicci P.G."/>
            <person name="Alitalo K."/>
        </authorList>
    </citation>
    <scope>INTERACTION WITH FGFR4</scope>
</reference>
<reference key="9">
    <citation type="journal article" date="1996" name="Mol. Cell. Biol.">
        <title>Phospholipase C-gamma1 interacts with conserved phosphotyrosyl residues in the linker region of Syk and is a substrate for Syk.</title>
        <authorList>
            <person name="Law C.L."/>
            <person name="Chandran K.A."/>
            <person name="Sidorenko S.P."/>
            <person name="Clark E.A."/>
        </authorList>
    </citation>
    <scope>PHOSPHORYLATION AT TYR-771 AND TYR-783 BY SYK</scope>
    <scope>INTERACTION WITH SYK</scope>
</reference>
<reference key="10">
    <citation type="journal article" date="1997" name="J. Biol. Chem.">
        <title>Direct association of Csk homologous kinase (CHK) with the diphosphorylated site Tyr568/570 of the activated c-KIT in megakaryocytes.</title>
        <authorList>
            <person name="Price D.J."/>
            <person name="Rivnay B."/>
            <person name="Fu Y."/>
            <person name="Jiang S."/>
            <person name="Avraham S."/>
            <person name="Avraham H."/>
        </authorList>
    </citation>
    <scope>INTERACTION WITH KIT</scope>
</reference>
<reference key="11">
    <citation type="journal article" date="1997" name="Oncogene">
        <title>Intracellular signaling of the Ufo/Axl receptor tyrosine kinase is mediated mainly by a multi-substrate docking-site.</title>
        <authorList>
            <person name="Braunger J."/>
            <person name="Schleithoff L."/>
            <person name="Schulz A.S."/>
            <person name="Kessler H."/>
            <person name="Lammers R."/>
            <person name="Ullrich A."/>
            <person name="Bartram C.R."/>
            <person name="Janssen J.W."/>
        </authorList>
    </citation>
    <scope>INTERACTION WITH AXL</scope>
</reference>
<reference key="12">
    <citation type="journal article" date="1998" name="Cell">
        <title>LAT: the ZAP-70 tyrosine kinase substrate that links T cell receptor to cellular activation.</title>
        <authorList>
            <person name="Zhang W."/>
            <person name="Sloan-Lancaster J."/>
            <person name="Kitchen J."/>
            <person name="Trible R.P."/>
            <person name="Samelson L.E."/>
        </authorList>
    </citation>
    <scope>INTERACTION WITH LAT</scope>
</reference>
<reference key="13">
    <citation type="journal article" date="1999" name="J. Biol. Chem.">
        <title>Requirement of the Src homology 2 domain protein Shb for T cell receptor-dependent activation of the interleukin-2 gene nuclear factor for activation of T cells element in Jurkat T cells.</title>
        <authorList>
            <person name="Lindholm C.K."/>
            <person name="Gylfe E."/>
            <person name="Zhang W."/>
            <person name="Samelson L.E."/>
            <person name="Welsh M."/>
        </authorList>
    </citation>
    <scope>INTERACTION WITH SHB</scope>
</reference>
<reference key="14">
    <citation type="journal article" date="1999" name="Oncogene">
        <title>Autophosphorylation of KDR in the kinase domain is required for maximal VEGF-stimulated kinase activity and receptor internalization.</title>
        <authorList>
            <person name="Dougher M."/>
            <person name="Terman B.I."/>
        </authorList>
    </citation>
    <scope>PHOSPHORYLATION BY KDR</scope>
</reference>
<reference key="15">
    <citation type="journal article" date="2000" name="Biochem. Biophys. Res. Commun.">
        <title>Characterization of the tyrosine kinase Tnk1 and its binding with phospholipase C-gamma1.</title>
        <authorList>
            <person name="Felschow D.M."/>
            <person name="Civin C.I."/>
            <person name="Hoehn G.T."/>
        </authorList>
    </citation>
    <scope>INTERACTION WITH TNK1</scope>
</reference>
<reference key="16">
    <citation type="journal article" date="2001" name="J. Biol. Chem.">
        <title>The ORF3 protein of hepatitis E virus binds to Src homology 3 domains and activates MAPK.</title>
        <authorList>
            <person name="Korkaya H."/>
            <person name="Jameel S."/>
            <person name="Gupta D."/>
            <person name="Tyagi S."/>
            <person name="Kumar R."/>
            <person name="Zafrullah M."/>
            <person name="Mazumdar M."/>
            <person name="Lal S.K."/>
            <person name="Xiaofang L."/>
            <person name="Sehgal D."/>
            <person name="Das S.R."/>
            <person name="Sahal D."/>
        </authorList>
    </citation>
    <scope>INTERACTION WITH HEPATITIS E VIRUS/HEV PROTEIN ORF3 (MICROBIAL INFECTION)</scope>
</reference>
<reference key="17">
    <citation type="journal article" date="2000" name="J. Biol. Chem.">
        <title>Identification and characterization of a new family of guanine nucleotide exchange factors for the ras-related GTPase Ral.</title>
        <authorList>
            <person name="Rebhun J.F."/>
            <person name="Chen H."/>
            <person name="Quilliam L.A."/>
        </authorList>
    </citation>
    <scope>INTERACTION WITH RALGPS1</scope>
</reference>
<reference key="18">
    <citation type="journal article" date="2001" name="Mol. Cell. Biol.">
        <title>Protein tyrosine phosphatase CD148-mediated inhibition of T-cell receptor signal transduction is associated with reduced LAT and phospholipase Cgamma1 phosphorylation.</title>
        <authorList>
            <person name="Baker J.E."/>
            <person name="Majeti R."/>
            <person name="Tangye S.G."/>
            <person name="Weiss A."/>
        </authorList>
    </citation>
    <scope>PROBABLE DEPHOSPHORYLATION BY PTPRJ</scope>
</reference>
<reference key="19">
    <citation type="journal article" date="2001" name="Mol. Cell. Biol.">
        <title>Membrane raft-dependent regulation of phospholipase Cgamma-1 activation in T lymphocytes.</title>
        <authorList>
            <person name="Veri M.C."/>
            <person name="DeBell K.E."/>
            <person name="Seminario M.C."/>
            <person name="DiBaldassarre A."/>
            <person name="Reischl I."/>
            <person name="Rawat R."/>
            <person name="Graham L."/>
            <person name="Noviello C."/>
            <person name="Rellahan B.L."/>
            <person name="Miscia S."/>
            <person name="Wange R.L."/>
            <person name="Bonvini E."/>
        </authorList>
    </citation>
    <scope>PHOSPHORYLATION AT TYR-783</scope>
    <scope>SUBCELLULAR LOCATION</scope>
</reference>
<reference key="20">
    <citation type="journal article" date="2003" name="J. Cell Biol.">
        <title>The tyrosine phosphatase CD148 is excluded from the immunologic synapse and down-regulates prolonged T cell signaling.</title>
        <authorList>
            <person name="Lin J."/>
            <person name="Weiss A."/>
        </authorList>
    </citation>
    <scope>PROBABLE DEPHOSPHORYLATION BY PTPRJ</scope>
</reference>
<reference key="21">
    <citation type="journal article" date="2004" name="Anal. Chem.">
        <title>Robust phosphoproteomic profiling of tyrosine phosphorylation sites from human T cells using immobilized metal affinity chromatography and tandem mass spectrometry.</title>
        <authorList>
            <person name="Brill L.M."/>
            <person name="Salomon A.R."/>
            <person name="Ficarro S.B."/>
            <person name="Mukherji M."/>
            <person name="Stettler-Gill M."/>
            <person name="Peters E.C."/>
        </authorList>
    </citation>
    <scope>PHOSPHORYLATION [LARGE SCALE ANALYSIS] AT TYR-771 AND TYR-1253</scope>
    <scope>IDENTIFICATION BY MASS SPECTROMETRY [LARGE SCALE ANALYSIS]</scope>
    <source>
        <tissue>Leukemic T-cell</tissue>
    </source>
</reference>
<reference key="22">
    <citation type="journal article" date="2004" name="Cancer Cell">
        <title>TrkA alternative splicing: a regulated tumor-promoting switch in human neuroblastoma.</title>
        <authorList>
            <person name="Tacconelli A."/>
            <person name="Farina A.R."/>
            <person name="Cappabianca L."/>
            <person name="Desantis G."/>
            <person name="Tessitore A."/>
            <person name="Vetuschi A."/>
            <person name="Sferra R."/>
            <person name="Rucci N."/>
            <person name="Argenti B."/>
            <person name="Screpanti I."/>
            <person name="Gulino A."/>
            <person name="Mackay A.R."/>
        </authorList>
    </citation>
    <scope>INTERACTION WITH NTRK1</scope>
</reference>
<reference key="23">
    <citation type="journal article" date="2004" name="Cell. Mol. Life Sci.">
        <title>Signal transduction via the stem cell factor receptor/c-Kit.</title>
        <authorList>
            <person name="Ronnstrand L."/>
        </authorList>
    </citation>
    <scope>REVIEW ON INTERACTION WITH KIT AND ROLE IN KIT SIGNALING</scope>
</reference>
<reference key="24">
    <citation type="journal article" date="2004" name="Immunology">
        <title>Deficiency of BLNK hampers PLC-gamma2 phosphorylation and Ca2+ influx induced by the pre-B-cell receptor in human pre-B cells.</title>
        <authorList>
            <person name="Taguchi T."/>
            <person name="Kiyokawa N."/>
            <person name="Takenouch H."/>
            <person name="Matsui J."/>
            <person name="Tang W.-R."/>
            <person name="Nakajima H."/>
            <person name="Suzuki K."/>
            <person name="Shiozawa Y."/>
            <person name="Saito M."/>
            <person name="Katagiri Y.U."/>
            <person name="Takahashi T."/>
            <person name="Karasuyama H."/>
            <person name="Matsuo Y."/>
            <person name="Okita H."/>
            <person name="Fujimoto J."/>
        </authorList>
    </citation>
    <scope>INTERACTION WITH BLNK; VAV1; GRB2 AND NCK1</scope>
</reference>
<reference key="25">
    <citation type="journal article" date="2004" name="J. Biol. Chem.">
        <title>Activation of vascular endothelial growth factor receptor-3 and its downstream signaling promote cell survival under oxidative stress.</title>
        <authorList>
            <person name="Wang J.F."/>
            <person name="Zhang X."/>
            <person name="Groopman J.E."/>
        </authorList>
    </citation>
    <scope>INTERACTION WITH FLT4</scope>
</reference>
<reference key="26">
    <citation type="journal article" date="2004" name="J. Biol. Chem.">
        <title>Vascular endothelial growth factor (VEGF)-D and VEGF-A differentially regulate KDR-mediated signaling and biological function in vascular endothelial cells.</title>
        <authorList>
            <person name="Jia H."/>
            <person name="Bagherzadeh A."/>
            <person name="Bicknell R."/>
            <person name="Duchen M.R."/>
            <person name="Liu D."/>
            <person name="Zachary I."/>
        </authorList>
    </citation>
    <scope>PHOSPHORYLATION AT TYR-783 IN RESPONSE TO KDR ACTIVATION</scope>
</reference>
<reference key="27">
    <citation type="journal article" date="2005" name="J. Immunol.">
        <title>Early phosphorylation kinetics of proteins involved in proximal TCR-mediated signaling pathways.</title>
        <authorList>
            <person name="Houtman J.C."/>
            <person name="Houghtling R.A."/>
            <person name="Barda-Saad M."/>
            <person name="Toda Y."/>
            <person name="Samelson L.E."/>
        </authorList>
    </citation>
    <scope>PHOSPHORYLATION BY ITK</scope>
</reference>
<reference key="28">
    <citation type="journal article" date="2006" name="J. Biol. Chem.">
        <title>Intracellular retention, degradation, and signaling of glycosylation-deficient FGFR2 and craniosynostosis syndrome-associated FGFR2C278F.</title>
        <authorList>
            <person name="Hatch N.E."/>
            <person name="Hudson M."/>
            <person name="Seto M.L."/>
            <person name="Cunningham M.L."/>
            <person name="Bothwell M."/>
        </authorList>
    </citation>
    <scope>INTERACTION WITH FGFR2</scope>
    <scope>PHOSPHORYLATION</scope>
</reference>
<reference key="29">
    <citation type="journal article" date="2007" name="Am. J. Physiol.">
        <title>Obligatory role for phospholipase C-gamma(1) in villin-induced epithelial cell migration.</title>
        <authorList>
            <person name="Wang Y."/>
            <person name="Tomar A."/>
            <person name="George S.P."/>
            <person name="Khurana S."/>
        </authorList>
    </citation>
    <scope>FUNCTION</scope>
    <scope>INTERACTION WITH VIL1</scope>
    <scope>SUBCELLULAR LOCATION</scope>
</reference>
<reference key="30">
    <citation type="journal article" date="2007" name="Bone">
        <title>Sustained phosphorylation of mutated FGFR3 is a crucial feature of genetic dwarfism and induces apoptosis in the ATDC5 chondrogenic cell line via PLCgamma-activated STAT1.</title>
        <authorList>
            <person name="Harada D."/>
            <person name="Yamanaka Y."/>
            <person name="Ueda K."/>
            <person name="Nishimura R."/>
            <person name="Morishima T."/>
            <person name="Seino Y."/>
            <person name="Tanaka H."/>
        </authorList>
    </citation>
    <scope>PHOSPHORYLATION BY FGFR3</scope>
</reference>
<reference key="31">
    <citation type="journal article" date="2007" name="J. Biol. Chem.">
        <title>Binding of Cbl to a phospholipase Cgamma1-docking site on platelet-derived growth factor receptor beta provides a dual mechanism of negative regulation.</title>
        <authorList>
            <person name="Reddi A.L."/>
            <person name="Ying G."/>
            <person name="Duan L."/>
            <person name="Chen G."/>
            <person name="Dimri M."/>
            <person name="Douillard P."/>
            <person name="Druker B.J."/>
            <person name="Naramura M."/>
            <person name="Band V."/>
            <person name="Band H."/>
        </authorList>
    </citation>
    <scope>INTERACTION WITH PDGFRB</scope>
</reference>
<reference key="32">
    <citation type="journal article" date="2008" name="Proc. Natl. Acad. Sci. U.S.A.">
        <title>A quantitative atlas of mitotic phosphorylation.</title>
        <authorList>
            <person name="Dephoure N."/>
            <person name="Zhou C."/>
            <person name="Villen J."/>
            <person name="Beausoleil S.A."/>
            <person name="Bakalarski C.E."/>
            <person name="Elledge S.J."/>
            <person name="Gygi S.P."/>
        </authorList>
    </citation>
    <scope>PHOSPHORYLATION [LARGE SCALE ANALYSIS] AT SER-1221</scope>
    <scope>PHOSPHORYLATION [LARGE SCALE ANALYSIS] AT SER-1222 (ISOFORM 2)</scope>
    <scope>IDENTIFICATION BY MASS SPECTROMETRY [LARGE SCALE ANALYSIS]</scope>
    <source>
        <tissue>Cervix carcinoma</tissue>
    </source>
</reference>
<reference key="33">
    <citation type="journal article" date="2009" name="Anal. Chem.">
        <title>Lys-N and trypsin cover complementary parts of the phosphoproteome in a refined SCX-based approach.</title>
        <authorList>
            <person name="Gauci S."/>
            <person name="Helbig A.O."/>
            <person name="Slijper M."/>
            <person name="Krijgsveld J."/>
            <person name="Heck A.J."/>
            <person name="Mohammed S."/>
        </authorList>
    </citation>
    <scope>ACETYLATION [LARGE SCALE ANALYSIS] AT ALA-2</scope>
    <scope>CLEAVAGE OF INITIATOR METHIONINE [LARGE SCALE ANALYSIS]</scope>
    <scope>IDENTIFICATION BY MASS SPECTROMETRY [LARGE SCALE ANALYSIS]</scope>
</reference>
<reference key="34">
    <citation type="journal article" date="2009" name="Hum. Mol. Genet.">
        <title>A novel interaction between fibroblast growth factor receptor 3 and the p85 subunit of phosphoinositide 3-kinase: activation-dependent regulation of ERK by p85 in multiple myeloma cells.</title>
        <authorList>
            <person name="Salazar L."/>
            <person name="Kashiwada T."/>
            <person name="Krejci P."/>
            <person name="Muchowski P."/>
            <person name="Donoghue D."/>
            <person name="Wilcox W.R."/>
            <person name="Thompson L.M."/>
        </authorList>
    </citation>
    <scope>INTERACTION WITH FGFR3</scope>
</reference>
<reference key="35">
    <citation type="journal article" date="2009" name="Sci. Signal.">
        <title>Quantitative phosphoproteomic analysis of T cell receptor signaling reveals system-wide modulation of protein-protein interactions.</title>
        <authorList>
            <person name="Mayya V."/>
            <person name="Lundgren D.H."/>
            <person name="Hwang S.-I."/>
            <person name="Rezaul K."/>
            <person name="Wu L."/>
            <person name="Eng J.K."/>
            <person name="Rodionov V."/>
            <person name="Han D.K."/>
        </authorList>
    </citation>
    <scope>PHOSPHORYLATION [LARGE SCALE ANALYSIS] AT TYR-771; TYR-775; TYR-783 AND SER-1221</scope>
    <scope>PHOSPHORYLATION [LARGE SCALE ANALYSIS] AT SER-1222 (ISOFORM 2)</scope>
    <scope>IDENTIFICATION BY MASS SPECTROMETRY [LARGE SCALE ANALYSIS]</scope>
    <source>
        <tissue>Leukemic T-cell</tissue>
    </source>
</reference>
<reference key="36">
    <citation type="journal article" date="2010" name="Cell. Signal.">
        <title>Mutation of tyrosine residue 857 in the PDGF beta-receptor affects cell proliferation but not migration.</title>
        <authorList>
            <person name="Wardega P."/>
            <person name="Heldin C.H."/>
            <person name="Lennartsson J."/>
        </authorList>
    </citation>
    <scope>INTERACTION WITH PDGFRB</scope>
    <scope>PHOSPHORYLATION AT TYR-771</scope>
</reference>
<reference key="37">
    <citation type="journal article" date="2010" name="Sci. Signal.">
        <title>Quantitative phosphoproteomics reveals widespread full phosphorylation site occupancy during mitosis.</title>
        <authorList>
            <person name="Olsen J.V."/>
            <person name="Vermeulen M."/>
            <person name="Santamaria A."/>
            <person name="Kumar C."/>
            <person name="Miller M.L."/>
            <person name="Jensen L.J."/>
            <person name="Gnad F."/>
            <person name="Cox J."/>
            <person name="Jensen T.S."/>
            <person name="Nigg E.A."/>
            <person name="Brunak S."/>
            <person name="Mann M."/>
        </authorList>
    </citation>
    <scope>PHOSPHORYLATION [LARGE SCALE ANALYSIS] AT SER-1221 AND TYR-1253</scope>
    <scope>IDENTIFICATION BY MASS SPECTROMETRY [LARGE SCALE ANALYSIS]</scope>
    <source>
        <tissue>Cervix carcinoma</tissue>
    </source>
</reference>
<reference key="38">
    <citation type="journal article" date="2011" name="BMC Syst. Biol.">
        <title>Initial characterization of the human central proteome.</title>
        <authorList>
            <person name="Burkard T.R."/>
            <person name="Planyavsky M."/>
            <person name="Kaupe I."/>
            <person name="Breitwieser F.P."/>
            <person name="Buerckstuemmer T."/>
            <person name="Bennett K.L."/>
            <person name="Superti-Furga G."/>
            <person name="Colinge J."/>
        </authorList>
    </citation>
    <scope>IDENTIFICATION BY MASS SPECTROMETRY [LARGE SCALE ANALYSIS]</scope>
</reference>
<reference key="39">
    <citation type="journal article" date="2011" name="EMBO J.">
        <title>Nedd4-1 binds and ubiquitylates activated FGFR1 to control its endocytosis and function.</title>
        <authorList>
            <person name="Persaud A."/>
            <person name="Alberts P."/>
            <person name="Hayes M."/>
            <person name="Guettler S."/>
            <person name="Clarke I."/>
            <person name="Sicheri F."/>
            <person name="Dirks P."/>
            <person name="Ciruna B."/>
            <person name="Rotin D."/>
        </authorList>
    </citation>
    <scope>INTERACTION WITH FGFR1</scope>
    <scope>PHOSPHORYLATION BY FGFR1</scope>
</reference>
<reference key="40">
    <citation type="journal article" date="2011" name="Sci. Signal.">
        <title>System-wide temporal characterization of the proteome and phosphoproteome of human embryonic stem cell differentiation.</title>
        <authorList>
            <person name="Rigbolt K.T."/>
            <person name="Prokhorova T.A."/>
            <person name="Akimov V."/>
            <person name="Henningsen J."/>
            <person name="Johansen P.T."/>
            <person name="Kratchmarova I."/>
            <person name="Kassem M."/>
            <person name="Mann M."/>
            <person name="Olsen J.V."/>
            <person name="Blagoev B."/>
        </authorList>
    </citation>
    <scope>PHOSPHORYLATION [LARGE SCALE ANALYSIS] AT SER-1222 (ISOFORM 2)</scope>
    <scope>IDENTIFICATION BY MASS SPECTROMETRY [LARGE SCALE ANALYSIS]</scope>
</reference>
<reference key="41">
    <citation type="journal article" date="2012" name="Nat. Immunol.">
        <title>Tespa1 is involved in late thymocyte development through the regulation of TCR-mediated signaling.</title>
        <authorList>
            <person name="Wang D."/>
            <person name="Zheng M."/>
            <person name="Lei L."/>
            <person name="Ji J."/>
            <person name="Yao Y."/>
            <person name="Qiu Y."/>
            <person name="Ma L."/>
            <person name="Lou J."/>
            <person name="Ouyang C."/>
            <person name="Zhang X."/>
            <person name="He Y."/>
            <person name="Chi J."/>
            <person name="Wang L."/>
            <person name="Kuang Y."/>
            <person name="Wang J."/>
            <person name="Cao X."/>
            <person name="Lu L."/>
        </authorList>
    </citation>
    <scope>INTERACTION WITH TESPA1</scope>
    <source>
        <tissue>Thymocyte</tissue>
    </source>
</reference>
<reference key="42">
    <citation type="journal article" date="2005" name="Cytokine Growth Factor Rev.">
        <title>Cellular signaling by fibroblast growth factor receptors.</title>
        <authorList>
            <person name="Eswarakumar V.P."/>
            <person name="Lax I."/>
            <person name="Schlessinger J."/>
        </authorList>
    </citation>
    <scope>REVIEW ON ROLE IN FGF-ACTIVATED SIGNALING PATHWAYS</scope>
</reference>
<reference key="43">
    <citation type="journal article" date="2013" name="J. Proteome Res.">
        <title>Toward a comprehensive characterization of a human cancer cell phosphoproteome.</title>
        <authorList>
            <person name="Zhou H."/>
            <person name="Di Palma S."/>
            <person name="Preisinger C."/>
            <person name="Peng M."/>
            <person name="Polat A.N."/>
            <person name="Heck A.J."/>
            <person name="Mohammed S."/>
        </authorList>
    </citation>
    <scope>PHOSPHORYLATION [LARGE SCALE ANALYSIS] AT SER-1221; SER-1227; SER-1233 AND SER-1263</scope>
    <scope>IDENTIFICATION BY MASS SPECTROMETRY [LARGE SCALE ANALYSIS]</scope>
    <source>
        <tissue>Cervix carcinoma</tissue>
        <tissue>Erythroleukemia</tissue>
    </source>
</reference>
<reference key="44">
    <citation type="journal article" date="2023" name="J. Allergy Clin. Immunol.">
        <title>A gain-of-function variation in PLCG1 causes a new immune dysregulation disease.</title>
        <authorList>
            <person name="Tao P."/>
            <person name="Han X."/>
            <person name="Wang Q."/>
            <person name="Wang S."/>
            <person name="Zhang J."/>
            <person name="Liu L."/>
            <person name="Fan X."/>
            <person name="Liu C."/>
            <person name="Liu M."/>
            <person name="Guo L."/>
            <person name="Lee P.Y."/>
            <person name="Aksentijevich I."/>
            <person name="Zhou Q."/>
        </authorList>
    </citation>
    <scope>INVOLVEMENT IN IDAA</scope>
    <scope>VARIANT IDAA PHE-1021</scope>
    <scope>CHARACTERIZATION OF VARIANT IDAA PHE-1021</scope>
    <scope>FUNCTION</scope>
</reference>
<reference key="45">
    <citation type="journal article" date="1993" name="Cell">
        <title>Solution structure of the SH3 domain of phospholipase C-gamma.</title>
        <authorList>
            <person name="Kohda D."/>
            <person name="Hatanaka H."/>
            <person name="Odaka M."/>
            <person name="Mandiyan V."/>
            <person name="Ullrich A."/>
            <person name="Schlessinger J."/>
            <person name="Inagaki F."/>
        </authorList>
    </citation>
    <scope>STRUCTURE BY NMR OF SH3 DOMAIN</scope>
</reference>
<evidence type="ECO:0000250" key="1"/>
<evidence type="ECO:0000250" key="2">
    <source>
        <dbReference type="UniProtKB" id="P10686"/>
    </source>
</evidence>
<evidence type="ECO:0000250" key="3">
    <source>
        <dbReference type="UniProtKB" id="Q62077"/>
    </source>
</evidence>
<evidence type="ECO:0000255" key="4">
    <source>
        <dbReference type="PROSITE-ProRule" id="PRU00041"/>
    </source>
</evidence>
<evidence type="ECO:0000255" key="5">
    <source>
        <dbReference type="PROSITE-ProRule" id="PRU00145"/>
    </source>
</evidence>
<evidence type="ECO:0000255" key="6">
    <source>
        <dbReference type="PROSITE-ProRule" id="PRU00191"/>
    </source>
</evidence>
<evidence type="ECO:0000255" key="7">
    <source>
        <dbReference type="PROSITE-ProRule" id="PRU00192"/>
    </source>
</evidence>
<evidence type="ECO:0000255" key="8">
    <source>
        <dbReference type="PROSITE-ProRule" id="PRU00270"/>
    </source>
</evidence>
<evidence type="ECO:0000255" key="9">
    <source>
        <dbReference type="PROSITE-ProRule" id="PRU00271"/>
    </source>
</evidence>
<evidence type="ECO:0000255" key="10">
    <source>
        <dbReference type="PROSITE-ProRule" id="PRU00448"/>
    </source>
</evidence>
<evidence type="ECO:0000256" key="11">
    <source>
        <dbReference type="SAM" id="MobiDB-lite"/>
    </source>
</evidence>
<evidence type="ECO:0000269" key="12">
    <source>
    </source>
</evidence>
<evidence type="ECO:0000269" key="13">
    <source>
    </source>
</evidence>
<evidence type="ECO:0000269" key="14">
    <source>
    </source>
</evidence>
<evidence type="ECO:0000269" key="15">
    <source>
    </source>
</evidence>
<evidence type="ECO:0000269" key="16">
    <source>
    </source>
</evidence>
<evidence type="ECO:0000269" key="17">
    <source>
    </source>
</evidence>
<evidence type="ECO:0000269" key="18">
    <source>
    </source>
</evidence>
<evidence type="ECO:0000269" key="19">
    <source>
    </source>
</evidence>
<evidence type="ECO:0000269" key="20">
    <source>
    </source>
</evidence>
<evidence type="ECO:0000269" key="21">
    <source>
    </source>
</evidence>
<evidence type="ECO:0000269" key="22">
    <source>
    </source>
</evidence>
<evidence type="ECO:0000269" key="23">
    <source>
    </source>
</evidence>
<evidence type="ECO:0000269" key="24">
    <source>
    </source>
</evidence>
<evidence type="ECO:0000269" key="25">
    <source>
    </source>
</evidence>
<evidence type="ECO:0000269" key="26">
    <source>
    </source>
</evidence>
<evidence type="ECO:0000269" key="27">
    <source>
    </source>
</evidence>
<evidence type="ECO:0000269" key="28">
    <source>
    </source>
</evidence>
<evidence type="ECO:0000269" key="29">
    <source>
    </source>
</evidence>
<evidence type="ECO:0000269" key="30">
    <source>
    </source>
</evidence>
<evidence type="ECO:0000269" key="31">
    <source>
    </source>
</evidence>
<evidence type="ECO:0000269" key="32">
    <source>
    </source>
</evidence>
<evidence type="ECO:0000269" key="33">
    <source>
    </source>
</evidence>
<evidence type="ECO:0000269" key="34">
    <source>
    </source>
</evidence>
<evidence type="ECO:0000269" key="35">
    <source>
    </source>
</evidence>
<evidence type="ECO:0000269" key="36">
    <source>
    </source>
</evidence>
<evidence type="ECO:0000269" key="37">
    <source>
    </source>
</evidence>
<evidence type="ECO:0000269" key="38">
    <source>
    </source>
</evidence>
<evidence type="ECO:0000269" key="39">
    <source>
    </source>
</evidence>
<evidence type="ECO:0000269" key="40">
    <source>
    </source>
</evidence>
<evidence type="ECO:0000269" key="41">
    <source ref="2"/>
</evidence>
<evidence type="ECO:0000303" key="42">
    <source>
    </source>
</evidence>
<evidence type="ECO:0000305" key="43"/>
<evidence type="ECO:0000312" key="44">
    <source>
        <dbReference type="HGNC" id="HGNC:9065"/>
    </source>
</evidence>
<evidence type="ECO:0007744" key="45">
    <source>
    </source>
</evidence>
<evidence type="ECO:0007744" key="46">
    <source>
    </source>
</evidence>
<evidence type="ECO:0007744" key="47">
    <source>
    </source>
</evidence>
<evidence type="ECO:0007744" key="48">
    <source>
    </source>
</evidence>
<evidence type="ECO:0007744" key="49">
    <source>
    </source>
</evidence>
<evidence type="ECO:0007744" key="50">
    <source>
    </source>
</evidence>
<evidence type="ECO:0007744" key="51">
    <source>
    </source>
</evidence>
<evidence type="ECO:0007829" key="52">
    <source>
        <dbReference type="PDB" id="1HSQ"/>
    </source>
</evidence>
<evidence type="ECO:0007829" key="53">
    <source>
        <dbReference type="PDB" id="2HSP"/>
    </source>
</evidence>
<evidence type="ECO:0007829" key="54">
    <source>
        <dbReference type="PDB" id="4EY0"/>
    </source>
</evidence>
<evidence type="ECO:0007829" key="55">
    <source>
        <dbReference type="PDB" id="4FBN"/>
    </source>
</evidence>
<evidence type="ECO:0007829" key="56">
    <source>
        <dbReference type="PDB" id="7NXE"/>
    </source>
</evidence>
<dbReference type="EC" id="3.1.4.11" evidence="2"/>
<dbReference type="EMBL" id="M34667">
    <property type="protein sequence ID" value="AAA36452.1"/>
    <property type="molecule type" value="mRNA"/>
</dbReference>
<dbReference type="EMBL" id="DQ297143">
    <property type="protein sequence ID" value="ABB84466.1"/>
    <property type="molecule type" value="Genomic_DNA"/>
</dbReference>
<dbReference type="EMBL" id="AL022394">
    <property type="status" value="NOT_ANNOTATED_CDS"/>
    <property type="molecule type" value="Genomic_DNA"/>
</dbReference>
<dbReference type="EMBL" id="CH471077">
    <property type="protein sequence ID" value="EAW75991.1"/>
    <property type="molecule type" value="Genomic_DNA"/>
</dbReference>
<dbReference type="EMBL" id="CH471077">
    <property type="protein sequence ID" value="EAW75992.1"/>
    <property type="molecule type" value="Genomic_DNA"/>
</dbReference>
<dbReference type="EMBL" id="BC136466">
    <property type="protein sequence ID" value="AAI36467.1"/>
    <property type="molecule type" value="mRNA"/>
</dbReference>
<dbReference type="EMBL" id="BC144136">
    <property type="protein sequence ID" value="AAI44137.1"/>
    <property type="molecule type" value="mRNA"/>
</dbReference>
<dbReference type="CCDS" id="CCDS13313.1">
    <molecule id="P19174-2"/>
</dbReference>
<dbReference type="CCDS" id="CCDS13314.1">
    <molecule id="P19174-1"/>
</dbReference>
<dbReference type="PIR" id="A36466">
    <property type="entry name" value="A36466"/>
</dbReference>
<dbReference type="RefSeq" id="NP_002651.2">
    <molecule id="P19174-2"/>
    <property type="nucleotide sequence ID" value="NM_002660.2"/>
</dbReference>
<dbReference type="RefSeq" id="NP_877963.1">
    <molecule id="P19174-1"/>
    <property type="nucleotide sequence ID" value="NM_182811.2"/>
</dbReference>
<dbReference type="PDB" id="1HSQ">
    <property type="method" value="NMR"/>
    <property type="chains" value="A=790-851"/>
</dbReference>
<dbReference type="PDB" id="2HSP">
    <property type="method" value="NMR"/>
    <property type="chains" value="A=790-851"/>
</dbReference>
<dbReference type="PDB" id="4EY0">
    <property type="method" value="X-ray"/>
    <property type="resolution" value="2.80 A"/>
    <property type="chains" value="A/B/C/D=545-790"/>
</dbReference>
<dbReference type="PDB" id="4FBN">
    <property type="method" value="X-ray"/>
    <property type="resolution" value="2.40 A"/>
    <property type="chains" value="A=545-790"/>
</dbReference>
<dbReference type="PDB" id="7NXE">
    <property type="method" value="X-ray"/>
    <property type="resolution" value="2.10 A"/>
    <property type="chains" value="A=545-772"/>
</dbReference>
<dbReference type="PDBsum" id="1HSQ"/>
<dbReference type="PDBsum" id="2HSP"/>
<dbReference type="PDBsum" id="4EY0"/>
<dbReference type="PDBsum" id="4FBN"/>
<dbReference type="PDBsum" id="7NXE"/>
<dbReference type="SMR" id="P19174"/>
<dbReference type="BioGRID" id="111351">
    <property type="interactions" value="231"/>
</dbReference>
<dbReference type="CORUM" id="P19174"/>
<dbReference type="DIP" id="DIP-100N"/>
<dbReference type="FunCoup" id="P19174">
    <property type="interactions" value="2878"/>
</dbReference>
<dbReference type="IntAct" id="P19174">
    <property type="interactions" value="163"/>
</dbReference>
<dbReference type="MINT" id="P19174"/>
<dbReference type="STRING" id="9606.ENSP00000244007"/>
<dbReference type="BindingDB" id="P19174"/>
<dbReference type="ChEMBL" id="CHEMBL3964"/>
<dbReference type="DrugCentral" id="P19174"/>
<dbReference type="MoonDB" id="P19174">
    <property type="type" value="Predicted"/>
</dbReference>
<dbReference type="GlyCosmos" id="P19174">
    <property type="glycosylation" value="1 site, 1 glycan"/>
</dbReference>
<dbReference type="GlyGen" id="P19174">
    <property type="glycosylation" value="1 site, 1 O-linked glycan (1 site)"/>
</dbReference>
<dbReference type="iPTMnet" id="P19174"/>
<dbReference type="PhosphoSitePlus" id="P19174"/>
<dbReference type="SwissPalm" id="P19174"/>
<dbReference type="BioMuta" id="PLCG1"/>
<dbReference type="DMDM" id="130225"/>
<dbReference type="CPTAC" id="CPTAC-1738"/>
<dbReference type="jPOST" id="P19174"/>
<dbReference type="MassIVE" id="P19174"/>
<dbReference type="PaxDb" id="9606-ENSP00000244007"/>
<dbReference type="PeptideAtlas" id="P19174"/>
<dbReference type="ProteomicsDB" id="53635">
    <molecule id="P19174-1"/>
</dbReference>
<dbReference type="ProteomicsDB" id="53636">
    <molecule id="P19174-2"/>
</dbReference>
<dbReference type="Pumba" id="P19174"/>
<dbReference type="ABCD" id="P19174">
    <property type="antibodies" value="1 sequenced antibody"/>
</dbReference>
<dbReference type="Antibodypedia" id="3796">
    <property type="antibodies" value="1165 antibodies from 43 providers"/>
</dbReference>
<dbReference type="DNASU" id="5335"/>
<dbReference type="Ensembl" id="ENST00000244007.7">
    <molecule id="P19174-2"/>
    <property type="protein sequence ID" value="ENSP00000244007.3"/>
    <property type="gene ID" value="ENSG00000124181.15"/>
</dbReference>
<dbReference type="Ensembl" id="ENST00000373271.5">
    <molecule id="P19174-1"/>
    <property type="protein sequence ID" value="ENSP00000362368.1"/>
    <property type="gene ID" value="ENSG00000124181.15"/>
</dbReference>
<dbReference type="Ensembl" id="ENST00000685551.1">
    <molecule id="P19174-2"/>
    <property type="protein sequence ID" value="ENSP00000508698.1"/>
    <property type="gene ID" value="ENSG00000124181.15"/>
</dbReference>
<dbReference type="GeneID" id="5335"/>
<dbReference type="KEGG" id="hsa:5335"/>
<dbReference type="MANE-Select" id="ENST00000685551.1">
    <molecule id="P19174-2"/>
    <property type="protein sequence ID" value="ENSP00000508698.1"/>
    <property type="RefSeq nucleotide sequence ID" value="NM_002660.3"/>
    <property type="RefSeq protein sequence ID" value="NP_002651.2"/>
</dbReference>
<dbReference type="UCSC" id="uc002xjo.2">
    <molecule id="P19174-1"/>
    <property type="organism name" value="human"/>
</dbReference>
<dbReference type="AGR" id="HGNC:9065"/>
<dbReference type="CTD" id="5335"/>
<dbReference type="DisGeNET" id="5335"/>
<dbReference type="GeneCards" id="PLCG1"/>
<dbReference type="HGNC" id="HGNC:9065">
    <property type="gene designation" value="PLCG1"/>
</dbReference>
<dbReference type="HPA" id="ENSG00000124181">
    <property type="expression patterns" value="Low tissue specificity"/>
</dbReference>
<dbReference type="MalaCards" id="PLCG1"/>
<dbReference type="MIM" id="172420">
    <property type="type" value="gene"/>
</dbReference>
<dbReference type="MIM" id="620514">
    <property type="type" value="phenotype"/>
</dbReference>
<dbReference type="neXtProt" id="NX_P19174"/>
<dbReference type="OpenTargets" id="ENSG00000124181"/>
<dbReference type="PharmGKB" id="PA33392"/>
<dbReference type="VEuPathDB" id="HostDB:ENSG00000124181"/>
<dbReference type="eggNOG" id="KOG1264">
    <property type="taxonomic scope" value="Eukaryota"/>
</dbReference>
<dbReference type="GeneTree" id="ENSGT00940000158901"/>
<dbReference type="HOGENOM" id="CLU_002738_5_0_1"/>
<dbReference type="InParanoid" id="P19174"/>
<dbReference type="OMA" id="CMLERGT"/>
<dbReference type="OrthoDB" id="269822at2759"/>
<dbReference type="PAN-GO" id="P19174">
    <property type="GO annotations" value="1 GO annotation based on evolutionary models"/>
</dbReference>
<dbReference type="PhylomeDB" id="P19174"/>
<dbReference type="TreeFam" id="TF313216"/>
<dbReference type="BRENDA" id="3.1.4.11">
    <property type="organism ID" value="2681"/>
</dbReference>
<dbReference type="PathwayCommons" id="P19174"/>
<dbReference type="Reactome" id="R-HSA-1169408">
    <property type="pathway name" value="ISG15 antiviral mechanism"/>
</dbReference>
<dbReference type="Reactome" id="R-HSA-1236382">
    <property type="pathway name" value="Constitutive Signaling by Ligand-Responsive EGFR Cancer Variants"/>
</dbReference>
<dbReference type="Reactome" id="R-HSA-1251932">
    <property type="pathway name" value="PLCG1 events in ERBB2 signaling"/>
</dbReference>
<dbReference type="Reactome" id="R-HSA-1489509">
    <property type="pathway name" value="DAG and IP3 signaling"/>
</dbReference>
<dbReference type="Reactome" id="R-HSA-167021">
    <property type="pathway name" value="PLC-gamma1 signalling"/>
</dbReference>
<dbReference type="Reactome" id="R-HSA-1855204">
    <property type="pathway name" value="Synthesis of IP3 and IP4 in the cytosol"/>
</dbReference>
<dbReference type="Reactome" id="R-HSA-186763">
    <property type="pathway name" value="Downstream signal transduction"/>
</dbReference>
<dbReference type="Reactome" id="R-HSA-201556">
    <property type="pathway name" value="Signaling by ALK"/>
</dbReference>
<dbReference type="Reactome" id="R-HSA-202433">
    <property type="pathway name" value="Generation of second messenger molecules"/>
</dbReference>
<dbReference type="Reactome" id="R-HSA-2029485">
    <property type="pathway name" value="Role of phospholipids in phagocytosis"/>
</dbReference>
<dbReference type="Reactome" id="R-HSA-210990">
    <property type="pathway name" value="PECAM1 interactions"/>
</dbReference>
<dbReference type="Reactome" id="R-HSA-212718">
    <property type="pathway name" value="EGFR interacts with phospholipase C-gamma"/>
</dbReference>
<dbReference type="Reactome" id="R-HSA-2424491">
    <property type="pathway name" value="DAP12 signaling"/>
</dbReference>
<dbReference type="Reactome" id="R-HSA-2871796">
    <property type="pathway name" value="FCERI mediated MAPK activation"/>
</dbReference>
<dbReference type="Reactome" id="R-HSA-2871809">
    <property type="pathway name" value="FCERI mediated Ca+2 mobilization"/>
</dbReference>
<dbReference type="Reactome" id="R-HSA-418890">
    <property type="pathway name" value="Role of second messengers in netrin-1 signaling"/>
</dbReference>
<dbReference type="Reactome" id="R-HSA-5218921">
    <property type="pathway name" value="VEGFR2 mediated cell proliferation"/>
</dbReference>
<dbReference type="Reactome" id="R-HSA-5637810">
    <property type="pathway name" value="Constitutive Signaling by EGFRvIII"/>
</dbReference>
<dbReference type="Reactome" id="R-HSA-5654219">
    <property type="pathway name" value="Phospholipase C-mediated cascade: FGFR1"/>
</dbReference>
<dbReference type="Reactome" id="R-HSA-5654221">
    <property type="pathway name" value="Phospholipase C-mediated cascade, FGFR2"/>
</dbReference>
<dbReference type="Reactome" id="R-HSA-5654227">
    <property type="pathway name" value="Phospholipase C-mediated cascade, FGFR3"/>
</dbReference>
<dbReference type="Reactome" id="R-HSA-5654228">
    <property type="pathway name" value="Phospholipase C-mediated cascade, FGFR4"/>
</dbReference>
<dbReference type="Reactome" id="R-HSA-5655253">
    <property type="pathway name" value="Signaling by FGFR2 in disease"/>
</dbReference>
<dbReference type="Reactome" id="R-HSA-5655291">
    <property type="pathway name" value="Signaling by FGFR4 in disease"/>
</dbReference>
<dbReference type="Reactome" id="R-HSA-5655302">
    <property type="pathway name" value="Signaling by FGFR1 in disease"/>
</dbReference>
<dbReference type="Reactome" id="R-HSA-5655332">
    <property type="pathway name" value="Signaling by FGFR3 in disease"/>
</dbReference>
<dbReference type="Reactome" id="R-HSA-8853659">
    <property type="pathway name" value="RET signaling"/>
</dbReference>
<dbReference type="Reactome" id="R-HSA-9026527">
    <property type="pathway name" value="Activated NTRK2 signals through PLCG1"/>
</dbReference>
<dbReference type="Reactome" id="R-HSA-9027277">
    <property type="pathway name" value="Erythropoietin activates Phospholipase C gamma (PLCG)"/>
</dbReference>
<dbReference type="Reactome" id="R-HSA-9034793">
    <property type="pathway name" value="Activated NTRK3 signals through PLCG1"/>
</dbReference>
<dbReference type="Reactome" id="R-HSA-9664323">
    <property type="pathway name" value="FCGR3A-mediated IL10 synthesis"/>
</dbReference>
<dbReference type="Reactome" id="R-HSA-9664565">
    <property type="pathway name" value="Signaling by ERBB2 KD Mutants"/>
</dbReference>
<dbReference type="Reactome" id="R-HSA-9665348">
    <property type="pathway name" value="Signaling by ERBB2 ECD mutants"/>
</dbReference>
<dbReference type="Reactome" id="R-HSA-9665686">
    <property type="pathway name" value="Signaling by ERBB2 TMD/JMD mutants"/>
</dbReference>
<dbReference type="Reactome" id="R-HSA-9725370">
    <property type="pathway name" value="Signaling by ALK fusions and activated point mutants"/>
</dbReference>
<dbReference type="SignaLink" id="P19174"/>
<dbReference type="SIGNOR" id="P19174"/>
<dbReference type="BioGRID-ORCS" id="5335">
    <property type="hits" value="27 hits in 1168 CRISPR screens"/>
</dbReference>
<dbReference type="CD-CODE" id="8C2F96ED">
    <property type="entry name" value="Centrosome"/>
</dbReference>
<dbReference type="CD-CODE" id="FB4E32DD">
    <property type="entry name" value="Presynaptic clusters and postsynaptic densities"/>
</dbReference>
<dbReference type="ChiTaRS" id="PLCG1">
    <property type="organism name" value="human"/>
</dbReference>
<dbReference type="EvolutionaryTrace" id="P19174"/>
<dbReference type="GeneWiki" id="PLCG1"/>
<dbReference type="GenomeRNAi" id="5335"/>
<dbReference type="Pharos" id="P19174">
    <property type="development level" value="Tchem"/>
</dbReference>
<dbReference type="PRO" id="PR:P19174"/>
<dbReference type="Proteomes" id="UP000005640">
    <property type="component" value="Chromosome 20"/>
</dbReference>
<dbReference type="RNAct" id="P19174">
    <property type="molecule type" value="protein"/>
</dbReference>
<dbReference type="Bgee" id="ENSG00000124181">
    <property type="expression patterns" value="Expressed in right hemisphere of cerebellum and 188 other cell types or tissues"/>
</dbReference>
<dbReference type="ExpressionAtlas" id="P19174">
    <property type="expression patterns" value="baseline and differential"/>
</dbReference>
<dbReference type="GO" id="GO:0042995">
    <property type="term" value="C:cell projection"/>
    <property type="evidence" value="ECO:0000314"/>
    <property type="project" value="BHF-UCL"/>
</dbReference>
<dbReference type="GO" id="GO:0008180">
    <property type="term" value="C:COP9 signalosome"/>
    <property type="evidence" value="ECO:0000314"/>
    <property type="project" value="UniProtKB"/>
</dbReference>
<dbReference type="GO" id="GO:0005737">
    <property type="term" value="C:cytoplasm"/>
    <property type="evidence" value="ECO:0000314"/>
    <property type="project" value="MGI"/>
</dbReference>
<dbReference type="GO" id="GO:0005829">
    <property type="term" value="C:cytosol"/>
    <property type="evidence" value="ECO:0000314"/>
    <property type="project" value="UniProtKB"/>
</dbReference>
<dbReference type="GO" id="GO:0030027">
    <property type="term" value="C:lamellipodium"/>
    <property type="evidence" value="ECO:0000314"/>
    <property type="project" value="UniProtKB"/>
</dbReference>
<dbReference type="GO" id="GO:0005886">
    <property type="term" value="C:plasma membrane"/>
    <property type="evidence" value="ECO:0000314"/>
    <property type="project" value="UniProtKB"/>
</dbReference>
<dbReference type="GO" id="GO:0001726">
    <property type="term" value="C:ruffle"/>
    <property type="evidence" value="ECO:0000314"/>
    <property type="project" value="UniProtKB"/>
</dbReference>
<dbReference type="GO" id="GO:0032587">
    <property type="term" value="C:ruffle membrane"/>
    <property type="evidence" value="ECO:0000314"/>
    <property type="project" value="ARUK-UCL"/>
</dbReference>
<dbReference type="GO" id="GO:0005509">
    <property type="term" value="F:calcium ion binding"/>
    <property type="evidence" value="ECO:0007669"/>
    <property type="project" value="InterPro"/>
</dbReference>
<dbReference type="GO" id="GO:0050429">
    <property type="term" value="F:calcium-dependent phospholipase C activity"/>
    <property type="evidence" value="ECO:0000250"/>
    <property type="project" value="UniProtKB"/>
</dbReference>
<dbReference type="GO" id="GO:0005085">
    <property type="term" value="F:guanyl-nucleotide exchange factor activity"/>
    <property type="evidence" value="ECO:0000250"/>
    <property type="project" value="UniProtKB"/>
</dbReference>
<dbReference type="GO" id="GO:0005168">
    <property type="term" value="F:neurotrophin TRKA receptor binding"/>
    <property type="evidence" value="ECO:0000353"/>
    <property type="project" value="UniProtKB"/>
</dbReference>
<dbReference type="GO" id="GO:0004435">
    <property type="term" value="F:phosphatidylinositol-4,5-bisphosphate phospholipase C activity"/>
    <property type="evidence" value="ECO:0000314"/>
    <property type="project" value="UniProtKB"/>
</dbReference>
<dbReference type="GO" id="GO:0004629">
    <property type="term" value="F:phospholipase C activity"/>
    <property type="evidence" value="ECO:0000314"/>
    <property type="project" value="MGI"/>
</dbReference>
<dbReference type="GO" id="GO:0019901">
    <property type="term" value="F:protein kinase binding"/>
    <property type="evidence" value="ECO:0000353"/>
    <property type="project" value="BHF-UCL"/>
</dbReference>
<dbReference type="GO" id="GO:0019722">
    <property type="term" value="P:calcium-mediated signaling"/>
    <property type="evidence" value="ECO:0000315"/>
    <property type="project" value="BHF-UCL"/>
</dbReference>
<dbReference type="GO" id="GO:0016477">
    <property type="term" value="P:cell migration"/>
    <property type="evidence" value="ECO:0000315"/>
    <property type="project" value="BHF-UCL"/>
</dbReference>
<dbReference type="GO" id="GO:0071364">
    <property type="term" value="P:cellular response to epidermal growth factor stimulus"/>
    <property type="evidence" value="ECO:0000314"/>
    <property type="project" value="UniProtKB"/>
</dbReference>
<dbReference type="GO" id="GO:0007173">
    <property type="term" value="P:epidermal growth factor receptor signaling pathway"/>
    <property type="evidence" value="ECO:0000315"/>
    <property type="project" value="BHF-UCL"/>
</dbReference>
<dbReference type="GO" id="GO:0038095">
    <property type="term" value="P:Fc-epsilon receptor signaling pathway"/>
    <property type="evidence" value="ECO:0000304"/>
    <property type="project" value="Reactome"/>
</dbReference>
<dbReference type="GO" id="GO:0002862">
    <property type="term" value="P:negative regulation of inflammatory response to antigenic stimulus"/>
    <property type="evidence" value="ECO:0000304"/>
    <property type="project" value="Reactome"/>
</dbReference>
<dbReference type="GO" id="GO:0046488">
    <property type="term" value="P:phosphatidylinositol metabolic process"/>
    <property type="evidence" value="ECO:0000250"/>
    <property type="project" value="UniProtKB"/>
</dbReference>
<dbReference type="GO" id="GO:0048015">
    <property type="term" value="P:phosphatidylinositol-mediated signaling"/>
    <property type="evidence" value="ECO:0000318"/>
    <property type="project" value="GO_Central"/>
</dbReference>
<dbReference type="GO" id="GO:0009395">
    <property type="term" value="P:phospholipid catabolic process"/>
    <property type="evidence" value="ECO:0007669"/>
    <property type="project" value="InterPro"/>
</dbReference>
<dbReference type="GO" id="GO:0045766">
    <property type="term" value="P:positive regulation of angiogenesis"/>
    <property type="evidence" value="ECO:0000314"/>
    <property type="project" value="DFLAT"/>
</dbReference>
<dbReference type="GO" id="GO:0043536">
    <property type="term" value="P:positive regulation of blood vessel endothelial cell migration"/>
    <property type="evidence" value="ECO:0000314"/>
    <property type="project" value="DFLAT"/>
</dbReference>
<dbReference type="GO" id="GO:2000353">
    <property type="term" value="P:positive regulation of endothelial cell apoptotic process"/>
    <property type="evidence" value="ECO:0000315"/>
    <property type="project" value="BHF-UCL"/>
</dbReference>
<dbReference type="GO" id="GO:0010634">
    <property type="term" value="P:positive regulation of epithelial cell migration"/>
    <property type="evidence" value="ECO:0000315"/>
    <property type="project" value="UniProtKB"/>
</dbReference>
<dbReference type="GO" id="GO:0051281">
    <property type="term" value="P:positive regulation of release of sequestered calcium ion into cytosol"/>
    <property type="evidence" value="ECO:0000315"/>
    <property type="project" value="BHF-UCL"/>
</dbReference>
<dbReference type="GO" id="GO:1905564">
    <property type="term" value="P:positive regulation of vascular endothelial cell proliferation"/>
    <property type="evidence" value="ECO:0000315"/>
    <property type="project" value="BHF-UCL"/>
</dbReference>
<dbReference type="GO" id="GO:0051209">
    <property type="term" value="P:release of sequestered calcium ion into cytosol"/>
    <property type="evidence" value="ECO:0000318"/>
    <property type="project" value="GO_Central"/>
</dbReference>
<dbReference type="GO" id="GO:0050852">
    <property type="term" value="P:T cell receptor signaling pathway"/>
    <property type="evidence" value="ECO:0000304"/>
    <property type="project" value="Reactome"/>
</dbReference>
<dbReference type="CDD" id="cd00275">
    <property type="entry name" value="C2_PLC_like"/>
    <property type="match status" value="1"/>
</dbReference>
<dbReference type="CDD" id="cd16214">
    <property type="entry name" value="EFh_PI-PLCgamma1"/>
    <property type="match status" value="1"/>
</dbReference>
<dbReference type="CDD" id="cd13362">
    <property type="entry name" value="PH_PLC_gamma"/>
    <property type="match status" value="1"/>
</dbReference>
<dbReference type="CDD" id="cd13234">
    <property type="entry name" value="PHsplit_PLC_gamma"/>
    <property type="match status" value="1"/>
</dbReference>
<dbReference type="CDD" id="cd08592">
    <property type="entry name" value="PI-PLCc_gamma"/>
    <property type="match status" value="1"/>
</dbReference>
<dbReference type="CDD" id="cd09932">
    <property type="entry name" value="SH2_C-SH2_PLC_gamma_like"/>
    <property type="match status" value="1"/>
</dbReference>
<dbReference type="CDD" id="cd10341">
    <property type="entry name" value="SH2_N-SH2_PLC_gamma_like"/>
    <property type="match status" value="1"/>
</dbReference>
<dbReference type="CDD" id="cd11970">
    <property type="entry name" value="SH3_PLCgamma1"/>
    <property type="match status" value="1"/>
</dbReference>
<dbReference type="FunFam" id="2.30.29.30:FF:000155">
    <property type="entry name" value="1-phosphatidylinositol 4,5-bisphosphate phosphodiesterase gamma"/>
    <property type="match status" value="1"/>
</dbReference>
<dbReference type="FunFam" id="2.30.30.40:FF:000051">
    <property type="entry name" value="1-phosphatidylinositol 4,5-bisphosphate phosphodiesterase gamma"/>
    <property type="match status" value="1"/>
</dbReference>
<dbReference type="FunFam" id="2.60.40.150:FF:000067">
    <property type="entry name" value="1-phosphatidylinositol 4,5-bisphosphate phosphodiesterase gamma"/>
    <property type="match status" value="1"/>
</dbReference>
<dbReference type="FunFam" id="3.20.20.190:FF:000004">
    <property type="entry name" value="1-phosphatidylinositol 4,5-bisphosphate phosphodiesterase gamma"/>
    <property type="match status" value="1"/>
</dbReference>
<dbReference type="FunFam" id="3.20.20.190:FF:000007">
    <property type="entry name" value="1-phosphatidylinositol 4,5-bisphosphate phosphodiesterase gamma"/>
    <property type="match status" value="1"/>
</dbReference>
<dbReference type="FunFam" id="3.30.505.10:FF:000009">
    <property type="entry name" value="1-phosphatidylinositol 4,5-bisphosphate phosphodiesterase gamma"/>
    <property type="match status" value="1"/>
</dbReference>
<dbReference type="FunFam" id="3.30.505.10:FF:000011">
    <property type="entry name" value="1-phosphatidylinositol 4,5-bisphosphate phosphodiesterase gamma"/>
    <property type="match status" value="1"/>
</dbReference>
<dbReference type="Gene3D" id="2.60.40.150">
    <property type="entry name" value="C2 domain"/>
    <property type="match status" value="1"/>
</dbReference>
<dbReference type="Gene3D" id="3.20.20.190">
    <property type="entry name" value="Phosphatidylinositol (PI) phosphodiesterase"/>
    <property type="match status" value="2"/>
</dbReference>
<dbReference type="Gene3D" id="2.30.29.30">
    <property type="entry name" value="Pleckstrin-homology domain (PH domain)/Phosphotyrosine-binding domain (PTB)"/>
    <property type="match status" value="1"/>
</dbReference>
<dbReference type="Gene3D" id="3.30.505.10">
    <property type="entry name" value="SH2 domain"/>
    <property type="match status" value="2"/>
</dbReference>
<dbReference type="Gene3D" id="2.30.30.40">
    <property type="entry name" value="SH3 Domains"/>
    <property type="match status" value="1"/>
</dbReference>
<dbReference type="InterPro" id="IPR000008">
    <property type="entry name" value="C2_dom"/>
</dbReference>
<dbReference type="InterPro" id="IPR035892">
    <property type="entry name" value="C2_domain_sf"/>
</dbReference>
<dbReference type="InterPro" id="IPR011992">
    <property type="entry name" value="EF-hand-dom_pair"/>
</dbReference>
<dbReference type="InterPro" id="IPR018247">
    <property type="entry name" value="EF_Hand_1_Ca_BS"/>
</dbReference>
<dbReference type="InterPro" id="IPR002048">
    <property type="entry name" value="EF_hand_dom"/>
</dbReference>
<dbReference type="InterPro" id="IPR011993">
    <property type="entry name" value="PH-like_dom_sf"/>
</dbReference>
<dbReference type="InterPro" id="IPR001849">
    <property type="entry name" value="PH_domain"/>
</dbReference>
<dbReference type="InterPro" id="IPR001192">
    <property type="entry name" value="PI-PLC_fam"/>
</dbReference>
<dbReference type="InterPro" id="IPR016279">
    <property type="entry name" value="PLC-gamma"/>
</dbReference>
<dbReference type="InterPro" id="IPR035023">
    <property type="entry name" value="PLC-gamma_C-SH2"/>
</dbReference>
<dbReference type="InterPro" id="IPR035024">
    <property type="entry name" value="PLC-gamma_N-SH2"/>
</dbReference>
<dbReference type="InterPro" id="IPR017946">
    <property type="entry name" value="PLC-like_Pdiesterase_TIM-brl"/>
</dbReference>
<dbReference type="InterPro" id="IPR057061">
    <property type="entry name" value="PLCG_EF-hand_2"/>
</dbReference>
<dbReference type="InterPro" id="IPR035724">
    <property type="entry name" value="PLCgamma1_SH3"/>
</dbReference>
<dbReference type="InterPro" id="IPR000909">
    <property type="entry name" value="PLipase_C_PInositol-sp_X_dom"/>
</dbReference>
<dbReference type="InterPro" id="IPR001711">
    <property type="entry name" value="PLipase_C_Pinositol-sp_Y"/>
</dbReference>
<dbReference type="InterPro" id="IPR000980">
    <property type="entry name" value="SH2"/>
</dbReference>
<dbReference type="InterPro" id="IPR036860">
    <property type="entry name" value="SH2_dom_sf"/>
</dbReference>
<dbReference type="InterPro" id="IPR036028">
    <property type="entry name" value="SH3-like_dom_sf"/>
</dbReference>
<dbReference type="InterPro" id="IPR001452">
    <property type="entry name" value="SH3_domain"/>
</dbReference>
<dbReference type="PANTHER" id="PTHR10336:SF173">
    <property type="entry name" value="1-PHOSPHATIDYLINOSITOL 4,5-BISPHOSPHATE PHOSPHODIESTERASE GAMMA-1"/>
    <property type="match status" value="1"/>
</dbReference>
<dbReference type="PANTHER" id="PTHR10336">
    <property type="entry name" value="PHOSPHOINOSITIDE-SPECIFIC PHOSPHOLIPASE C FAMILY PROTEIN"/>
    <property type="match status" value="1"/>
</dbReference>
<dbReference type="Pfam" id="PF00168">
    <property type="entry name" value="C2"/>
    <property type="match status" value="1"/>
</dbReference>
<dbReference type="Pfam" id="PF23329">
    <property type="entry name" value="EF_HAND_1_PLCG"/>
    <property type="match status" value="1"/>
</dbReference>
<dbReference type="Pfam" id="PF23583">
    <property type="entry name" value="EF_HAND_2_PLCG"/>
    <property type="match status" value="1"/>
</dbReference>
<dbReference type="Pfam" id="PF00169">
    <property type="entry name" value="PH"/>
    <property type="match status" value="1"/>
</dbReference>
<dbReference type="Pfam" id="PF00388">
    <property type="entry name" value="PI-PLC-X"/>
    <property type="match status" value="1"/>
</dbReference>
<dbReference type="Pfam" id="PF00387">
    <property type="entry name" value="PI-PLC-Y"/>
    <property type="match status" value="1"/>
</dbReference>
<dbReference type="Pfam" id="PF00017">
    <property type="entry name" value="SH2"/>
    <property type="match status" value="2"/>
</dbReference>
<dbReference type="Pfam" id="PF00018">
    <property type="entry name" value="SH3_1"/>
    <property type="match status" value="1"/>
</dbReference>
<dbReference type="PIRSF" id="PIRSF000952">
    <property type="entry name" value="PLC-gamma"/>
    <property type="match status" value="1"/>
</dbReference>
<dbReference type="PRINTS" id="PR00390">
    <property type="entry name" value="PHPHLIPASEC"/>
</dbReference>
<dbReference type="PRINTS" id="PR00401">
    <property type="entry name" value="SH2DOMAIN"/>
</dbReference>
<dbReference type="SMART" id="SM00239">
    <property type="entry name" value="C2"/>
    <property type="match status" value="1"/>
</dbReference>
<dbReference type="SMART" id="SM00233">
    <property type="entry name" value="PH"/>
    <property type="match status" value="3"/>
</dbReference>
<dbReference type="SMART" id="SM00148">
    <property type="entry name" value="PLCXc"/>
    <property type="match status" value="1"/>
</dbReference>
<dbReference type="SMART" id="SM00149">
    <property type="entry name" value="PLCYc"/>
    <property type="match status" value="1"/>
</dbReference>
<dbReference type="SMART" id="SM00252">
    <property type="entry name" value="SH2"/>
    <property type="match status" value="2"/>
</dbReference>
<dbReference type="SMART" id="SM00326">
    <property type="entry name" value="SH3"/>
    <property type="match status" value="1"/>
</dbReference>
<dbReference type="SUPFAM" id="SSF49562">
    <property type="entry name" value="C2 domain (Calcium/lipid-binding domain, CaLB)"/>
    <property type="match status" value="1"/>
</dbReference>
<dbReference type="SUPFAM" id="SSF47473">
    <property type="entry name" value="EF-hand"/>
    <property type="match status" value="1"/>
</dbReference>
<dbReference type="SUPFAM" id="SSF50729">
    <property type="entry name" value="PH domain-like"/>
    <property type="match status" value="1"/>
</dbReference>
<dbReference type="SUPFAM" id="SSF51695">
    <property type="entry name" value="PLC-like phosphodiesterases"/>
    <property type="match status" value="1"/>
</dbReference>
<dbReference type="SUPFAM" id="SSF55550">
    <property type="entry name" value="SH2 domain"/>
    <property type="match status" value="2"/>
</dbReference>
<dbReference type="SUPFAM" id="SSF50044">
    <property type="entry name" value="SH3-domain"/>
    <property type="match status" value="1"/>
</dbReference>
<dbReference type="PROSITE" id="PS50004">
    <property type="entry name" value="C2"/>
    <property type="match status" value="1"/>
</dbReference>
<dbReference type="PROSITE" id="PS00018">
    <property type="entry name" value="EF_HAND_1"/>
    <property type="match status" value="1"/>
</dbReference>
<dbReference type="PROSITE" id="PS50222">
    <property type="entry name" value="EF_HAND_2"/>
    <property type="match status" value="1"/>
</dbReference>
<dbReference type="PROSITE" id="PS50003">
    <property type="entry name" value="PH_DOMAIN"/>
    <property type="match status" value="2"/>
</dbReference>
<dbReference type="PROSITE" id="PS50007">
    <property type="entry name" value="PIPLC_X_DOMAIN"/>
    <property type="match status" value="1"/>
</dbReference>
<dbReference type="PROSITE" id="PS50008">
    <property type="entry name" value="PIPLC_Y_DOMAIN"/>
    <property type="match status" value="1"/>
</dbReference>
<dbReference type="PROSITE" id="PS50001">
    <property type="entry name" value="SH2"/>
    <property type="match status" value="2"/>
</dbReference>
<dbReference type="PROSITE" id="PS50002">
    <property type="entry name" value="SH3"/>
    <property type="match status" value="1"/>
</dbReference>
<sequence length="1290" mass="148532">MAGAASPCANGCGPGAPSDAEVLHLCRSLEVGTVMTLFYSKKSQRPERKTFQVKLETRQITWSRGADKIEGAIDIREIKEIRPGKTSRDFDRYQEDPAFRPDQSHCFVILYGMEFRLKTLSLQATSEDEVNMWIKGLTWLMEDTLQAPTPLQIERWLRKQFYSVDRNREDRISAKDLKNMLSQVNYRVPNMRFLRERLTDLEQRSGDITYGQFAQLYRSLMYSAQKTMDLPFLEASTLRAGERPELCRVSLPEFQQFLLDYQGELWAVDRLQVQEFMLSFLRDPLREIEEPYFFLDEFVTFLFSKENSVWNSQLDAVCPDTMNNPLSHYWISSSHNTYLTGDQFSSESSLEAYARCLRMGCRCIELDCWDGPDGMPVIYHGHTLTTKIKFSDVLHTIKEHAFVASEYPVILSIEDHCSIAQQRNMAQYFKKVLGDTLLTKPVEISADGLPSPNQLKRKILIKHKKLAEGSAYEEVPTSMMYSENDISNSIKNGILYLEDPVNHEWYPHYFVLTSSKIYYSEETSSDQGNEDEEEPKEVSSSTELHSNEKWFHGKLGAGRDGRHIAERLLTEYCIETGAPDGSFLVRESETFVGDYTLSFWRNGKVQHCRIHSRQDAGTPKFFLTDNLVFDSLYDLITHYQQVPLRCNEFEMRLSEPVPQTNAHESKEWYHASLTRAQAEHMLMRVPRDGAFLVRKRNEPNSYAISFRAEGKIKHCRVQQEGQTVMLGNSEFDSLVDLISYYEKHPLYRKMKLRYPINEEALEKIGTAEPDYGALYEGRNPGFYVEANPMPTFKCAVKALFDYKAQREDELTFIKSAIIQNVEKQEGGWWRGDYGGKKQLWFPSNYVEEMVNPVALEPEREHLDENSPLGDLLRGVLDVPACQIAIRPEGKNNRLFVFSISMASVAHWSLDVAADSQEELQDWVKKIREVAQTADARLTEGKIMERRKKIALELSELVVYCRPVPFDEEKIGTERACYRDMSSFPETKAEKYVNKAKGKKFLQYNRLQLSRIYPKGQRLDSSNYDPLPMWICGSQLVALNFQTPDKPMQMNQALFMTGRHCGYVLQPSTMRDEAFDPFDKSSLRGLEPCAISIEVLGARHLPKNGRGIVCPFVEIEVAGAEYDSTKQKTEFVVDNGLNPVWPAKPFHFQISNPEFAFLRFVVYEEDMFSDQNFLAQATFPVKGLKTGYRAVPLKNNYSEDLELASLLIKIDIFPAKENGDLSPFSGTSLRERGSDASGQLFHGRAREGSFESRYQQPFEDFRISQEHLADHFDSRERRAPRRTRVNGDNRL</sequence>
<gene>
    <name evidence="44" type="primary">PLCG1</name>
    <name type="synonym">PLC1</name>
</gene>
<proteinExistence type="evidence at protein level"/>
<accession>P19174</accession>
<accession>B7ZLY7</accession>
<accession>B9EGH4</accession>
<accession>E1P5W4</accession>
<accession>Q2V575</accession>
<name>PLCG1_HUMAN</name>